<organism>
    <name type="scientific">Escherichia coli (strain K12)</name>
    <dbReference type="NCBI Taxonomy" id="83333"/>
    <lineage>
        <taxon>Bacteria</taxon>
        <taxon>Pseudomonadati</taxon>
        <taxon>Pseudomonadota</taxon>
        <taxon>Gammaproteobacteria</taxon>
        <taxon>Enterobacterales</taxon>
        <taxon>Enterobacteriaceae</taxon>
        <taxon>Escherichia</taxon>
    </lineage>
</organism>
<proteinExistence type="evidence at protein level"/>
<comment type="function">
    <text>Binds together with bS18 to 16S ribosomal RNA.</text>
</comment>
<comment type="subunit">
    <text evidence="2 3 4 5 7 8 9 10 11">Part of the 30S ribosomal subunit (PubMed:10094780, PubMed:12244297, PubMed:12809609, PubMed:16272117, PubMed:27906160, PubMed:27906161, PubMed:27934701, PubMed:28077875, PubMed:328274). Interacts weakly with uL2 in one of the 3.5 A resolved structures (PubMed:16272117).</text>
</comment>
<comment type="interaction">
    <interactant intactId="EBI-543068">
        <id>P02358</id>
    </interactant>
    <interactant intactId="EBI-548844">
        <id>P0A7T7</id>
        <label>rpsR</label>
    </interactant>
    <organismsDiffer>false</organismsDiffer>
    <experiments>4</experiments>
</comment>
<comment type="PTM">
    <text evidence="11">5 different forms of the protein, varying only in the number of C-terminal glutamate residues, were isolated. The sequence shown is form bS6-6, which is the longest. The first two Glu are encoded by the rpsF gene, the other Glu are added post-translationally by the RimK enzyme.</text>
</comment>
<comment type="mass spectrometry" mass="15187.2" method="MALDI" evidence="2">
    <molecule>Small ribosomal subunit protein bS6, non-modified isoform</molecule>
</comment>
<comment type="similarity">
    <text evidence="13">Belongs to the bacterial ribosomal protein bS6 family.</text>
</comment>
<comment type="sequence caution" evidence="14">
    <conflict type="miscellaneous discrepancy">
        <sequence resource="EMBL-CDS" id="AAA97096"/>
    </conflict>
    <text>Up to 4 Glu residues can be added post-translationally.</text>
</comment>
<comment type="sequence caution" evidence="14">
    <conflict type="miscellaneous discrepancy">
        <sequence resource="EMBL-CDS" id="AAC77157"/>
    </conflict>
    <text>Up to 4 Glu residues can be added post-translationally.</text>
</comment>
<comment type="sequence caution" evidence="14">
    <conflict type="miscellaneous discrepancy">
        <sequence resource="EMBL-CDS" id="BAE78201"/>
    </conflict>
    <text>Up to 4 Glu residues can be added post-translationally.</text>
</comment>
<comment type="sequence caution" evidence="14">
    <conflict type="miscellaneous discrepancy">
        <sequence resource="EMBL-CDS" id="CAA27652"/>
    </conflict>
    <text>Up to 4 Glu residues can be added post-translationally.</text>
</comment>
<accession>P02358</accession>
<accession>Q2M6A5</accession>
<feature type="chain" id="PRO_0000030640" description="Small ribosomal subunit protein bS6, fully modified isoform" evidence="11">
    <location>
        <begin position="1"/>
        <end position="135"/>
    </location>
</feature>
<feature type="chain" id="PRO_0000030641" description="Small ribosomal subunit protein bS6, non-modified isoform">
    <location>
        <begin position="1"/>
        <end position="131"/>
    </location>
</feature>
<feature type="region of interest" description="Disordered" evidence="1">
    <location>
        <begin position="98"/>
        <end position="135"/>
    </location>
</feature>
<feature type="compositionally biased region" description="Basic and acidic residues" evidence="1">
    <location>
        <begin position="104"/>
        <end position="116"/>
    </location>
</feature>
<feature type="compositionally biased region" description="Acidic residues" evidence="1">
    <location>
        <begin position="120"/>
        <end position="135"/>
    </location>
</feature>
<feature type="modified residue" description="N6-acetyllysine" evidence="6">
    <location>
        <position position="93"/>
    </location>
</feature>
<feature type="sequence conflict" description="In Ref. 6; AA sequence." evidence="13" ref="6">
    <original>Q</original>
    <variation>T</variation>
    <location>
        <position position="14"/>
    </location>
</feature>
<feature type="sequence conflict" description="In Ref. 6; AA sequence." evidence="13" ref="6">
    <original>G</original>
    <variation>A</variation>
    <location>
        <position position="20"/>
    </location>
</feature>
<feature type="strand" evidence="16">
    <location>
        <begin position="2"/>
        <end position="10"/>
    </location>
</feature>
<feature type="helix" evidence="16">
    <location>
        <begin position="12"/>
        <end position="17"/>
    </location>
</feature>
<feature type="helix" evidence="16">
    <location>
        <begin position="18"/>
        <end position="30"/>
    </location>
</feature>
<feature type="turn" evidence="16">
    <location>
        <begin position="31"/>
        <end position="33"/>
    </location>
</feature>
<feature type="strand" evidence="16">
    <location>
        <begin position="35"/>
        <end position="51"/>
    </location>
</feature>
<feature type="strand" evidence="16">
    <location>
        <begin position="54"/>
        <end position="66"/>
    </location>
</feature>
<feature type="helix" evidence="16">
    <location>
        <begin position="68"/>
        <end position="79"/>
    </location>
</feature>
<feature type="strand" evidence="16">
    <location>
        <begin position="84"/>
        <end position="94"/>
    </location>
</feature>
<feature type="helix" evidence="15">
    <location>
        <begin position="101"/>
        <end position="104"/>
    </location>
</feature>
<sequence length="135" mass="15703">MRHYEIVFMVHPDQSEQVPGMIERYTAAITGAEGKIHRLEDWGRRQLAYPINKLHKAHYVLMNVEAPQEVIDELETTFRFNDAVIRSMVMRTKHAVTEASPMVKAKDERRERRDDFANETADDAEAGDSEEEEEE</sequence>
<reference key="1">
    <citation type="journal article" date="1977" name="Eur. J. Biochem.">
        <title>Determination of the complete amino-acid sequence of protein S6 from the wild-type and a mutant of Escherichia coli.</title>
        <authorList>
            <person name="Hitz H."/>
            <person name="Schaefer D."/>
            <person name="Wittmann-Liebold B."/>
        </authorList>
    </citation>
    <scope>PROTEIN SEQUENCE</scope>
    <scope>SUBUNIT</scope>
    <source>
        <strain>K</strain>
    </source>
</reference>
<reference key="2">
    <citation type="journal article" date="1986" name="Mol. Gen. Genet.">
        <title>The nucleotide sequence of an Escherichia coli chromosomal region containing the genes for ribosomal proteins S6, S18, L9 and an open reading frame.</title>
        <authorList>
            <person name="Schnier J."/>
            <person name="Kitakawa M."/>
            <person name="Isono K."/>
        </authorList>
    </citation>
    <scope>NUCLEOTIDE SEQUENCE [GENOMIC DNA] OF 1-131</scope>
</reference>
<reference key="3">
    <citation type="journal article" date="1995" name="Nucleic Acids Res.">
        <title>Analysis of the Escherichia coli genome VI: DNA sequence of the region from 92.8 through 100 minutes.</title>
        <authorList>
            <person name="Burland V.D."/>
            <person name="Plunkett G. III"/>
            <person name="Sofia H.J."/>
            <person name="Daniels D.L."/>
            <person name="Blattner F.R."/>
        </authorList>
    </citation>
    <scope>NUCLEOTIDE SEQUENCE [LARGE SCALE GENOMIC DNA] OF 1-131</scope>
    <source>
        <strain>K12 / MG1655 / ATCC 47076</strain>
    </source>
</reference>
<reference key="4">
    <citation type="journal article" date="1997" name="Science">
        <title>The complete genome sequence of Escherichia coli K-12.</title>
        <authorList>
            <person name="Blattner F.R."/>
            <person name="Plunkett G. III"/>
            <person name="Bloch C.A."/>
            <person name="Perna N.T."/>
            <person name="Burland V."/>
            <person name="Riley M."/>
            <person name="Collado-Vides J."/>
            <person name="Glasner J.D."/>
            <person name="Rode C.K."/>
            <person name="Mayhew G.F."/>
            <person name="Gregor J."/>
            <person name="Davis N.W."/>
            <person name="Kirkpatrick H.A."/>
            <person name="Goeden M.A."/>
            <person name="Rose D.J."/>
            <person name="Mau B."/>
            <person name="Shao Y."/>
        </authorList>
    </citation>
    <scope>NUCLEOTIDE SEQUENCE [LARGE SCALE GENOMIC DNA] OF 1-131</scope>
    <source>
        <strain>K12 / MG1655 / ATCC 47076</strain>
    </source>
</reference>
<reference key="5">
    <citation type="journal article" date="2006" name="Mol. Syst. Biol.">
        <title>Highly accurate genome sequences of Escherichia coli K-12 strains MG1655 and W3110.</title>
        <authorList>
            <person name="Hayashi K."/>
            <person name="Morooka N."/>
            <person name="Yamamoto Y."/>
            <person name="Fujita K."/>
            <person name="Isono K."/>
            <person name="Choi S."/>
            <person name="Ohtsubo E."/>
            <person name="Baba T."/>
            <person name="Wanner B.L."/>
            <person name="Mori H."/>
            <person name="Horiuchi T."/>
        </authorList>
    </citation>
    <scope>NUCLEOTIDE SEQUENCE [LARGE SCALE GENOMIC DNA] OF 1-131</scope>
    <source>
        <strain>K12 / W3110 / ATCC 27325 / DSM 5911</strain>
    </source>
</reference>
<reference key="6">
    <citation type="journal article" date="1998" name="FEMS Microbiol. Lett.">
        <title>Small genes/gene-products in Escherichia coli K-12.</title>
        <authorList>
            <person name="Wasinger V.C."/>
            <person name="Humphery-Smith I."/>
        </authorList>
    </citation>
    <scope>PROTEIN SEQUENCE OF 1-20</scope>
    <source>
        <strain>K12</strain>
    </source>
</reference>
<reference key="7">
    <citation type="submission" date="1994-09" db="UniProtKB">
        <authorList>
            <person name="Pasquali C."/>
            <person name="Sanchez J.-C."/>
            <person name="Ravier F."/>
            <person name="Golaz O."/>
            <person name="Hughes G.J."/>
            <person name="Frutiger S."/>
            <person name="Paquet N."/>
            <person name="Wilkins M."/>
            <person name="Appel R.D."/>
            <person name="Bairoch A."/>
            <person name="Hochstrasser D.F."/>
        </authorList>
    </citation>
    <scope>PROTEIN SEQUENCE OF 1-11</scope>
    <source>
        <strain>K12 / W3110 / ATCC 27325 / DSM 5911</strain>
    </source>
</reference>
<reference key="8">
    <citation type="journal article" date="1997" name="Electrophoresis">
        <title>Comparing the predicted and observed properties of proteins encoded in the genome of Escherichia coli K-12.</title>
        <authorList>
            <person name="Link A.J."/>
            <person name="Robison K."/>
            <person name="Church G.M."/>
        </authorList>
    </citation>
    <scope>PROTEIN SEQUENCE OF 1-12</scope>
    <source>
        <strain>K12 / EMG2</strain>
    </source>
</reference>
<reference key="9">
    <citation type="journal article" date="1998" name="J. Mol. Biol.">
        <title>Protein identification with N and C-terminal sequence tags in proteome projects.</title>
        <authorList>
            <person name="Wilkins M.R."/>
            <person name="Gasteiger E."/>
            <person name="Tonella L."/>
            <person name="Ou K."/>
            <person name="Tyler M."/>
            <person name="Sanchez J.-C."/>
            <person name="Gooley A.A."/>
            <person name="Walsh B.J."/>
            <person name="Bairoch A."/>
            <person name="Appel R.D."/>
            <person name="Williams K.L."/>
            <person name="Hochstrasser D.F."/>
        </authorList>
    </citation>
    <scope>PROTEIN SEQUENCE OF 1-4</scope>
    <source>
        <strain>K12 / W3110 / ATCC 27325 / DSM 5911</strain>
    </source>
</reference>
<reference key="10">
    <citation type="journal article" date="1997" name="Electrophoresis">
        <title>Escherichia coli proteome analysis using the gene-protein database.</title>
        <authorList>
            <person name="VanBogelen R.A."/>
            <person name="Abshire K.Z."/>
            <person name="Moldover B."/>
            <person name="Olson E.R."/>
            <person name="Neidhardt F.C."/>
        </authorList>
    </citation>
    <scope>IDENTIFICATION BY 2D-GEL</scope>
</reference>
<reference key="11">
    <citation type="journal article" date="1999" name="Anal. Biochem.">
        <title>Observation of Escherichia coli ribosomal proteins and their posttranslational modifications by mass spectrometry.</title>
        <authorList>
            <person name="Arnold R.J."/>
            <person name="Reilly J.P."/>
        </authorList>
    </citation>
    <scope>MASS SPECTROMETRY</scope>
    <scope>SUBUNIT</scope>
    <source>
        <strain>K12 / ATCC 25404 / DSM 5698 / NCIMB 11290</strain>
    </source>
</reference>
<reference key="12">
    <citation type="journal article" date="2009" name="Mol. Cell. Proteomics">
        <title>Lysine acetylation is a highly abundant and evolutionarily conserved modification in Escherichia coli.</title>
        <authorList>
            <person name="Zhang J."/>
            <person name="Sprung R."/>
            <person name="Pei J."/>
            <person name="Tan X."/>
            <person name="Kim S."/>
            <person name="Zhu H."/>
            <person name="Liu C.F."/>
            <person name="Grishin N.V."/>
            <person name="Zhao Y."/>
        </authorList>
    </citation>
    <scope>ACETYLATION [LARGE SCALE ANALYSIS] AT LYS-93</scope>
    <scope>IDENTIFICATION BY MASS SPECTROMETRY</scope>
    <source>
        <strain>K12 / JW1106</strain>
        <strain>K12 / MG1655 / ATCC 47076</strain>
    </source>
</reference>
<reference key="13">
    <citation type="journal article" date="2014" name="Curr. Opin. Struct. Biol.">
        <title>A new system for naming ribosomal proteins.</title>
        <authorList>
            <person name="Ban N."/>
            <person name="Beckmann R."/>
            <person name="Cate J.H.D."/>
            <person name="Dinman J.D."/>
            <person name="Dragon F."/>
            <person name="Ellis S.R."/>
            <person name="Lafontaine D.L.J."/>
            <person name="Lindahl L."/>
            <person name="Liljas A."/>
            <person name="Lipton J.M."/>
            <person name="McAlear M.A."/>
            <person name="Moore P.B."/>
            <person name="Noller H.F."/>
            <person name="Ortega J."/>
            <person name="Panse V.G."/>
            <person name="Ramakrishnan V."/>
            <person name="Spahn C.M.T."/>
            <person name="Steitz T.A."/>
            <person name="Tchorzewski M."/>
            <person name="Tollervey D."/>
            <person name="Warren A.J."/>
            <person name="Williamson J.R."/>
            <person name="Wilson D."/>
            <person name="Yonath A."/>
            <person name="Yusupov M."/>
        </authorList>
    </citation>
    <scope>NOMENCLATURE</scope>
</reference>
<reference key="14">
    <citation type="journal article" date="2002" name="Nat. Struct. Biol.">
        <title>All-atom homology model of the Escherichia coli 30S ribosomal subunit.</title>
        <authorList>
            <person name="Tung C.-S."/>
            <person name="Joseph S."/>
            <person name="Sanbonmatsu K.Y."/>
        </authorList>
    </citation>
    <scope>3D-STRUCTURE MODELING</scope>
    <scope>SUBUNIT</scope>
</reference>
<reference key="15">
    <citation type="journal article" date="2003" name="Cell">
        <title>Study of the structural dynamics of the E. coli 70S ribosome using real-space refinement.</title>
        <authorList>
            <person name="Gao H."/>
            <person name="Sengupta J."/>
            <person name="Valle M."/>
            <person name="Korostelev A."/>
            <person name="Eswar N."/>
            <person name="Stagg S.M."/>
            <person name="Van Roey P."/>
            <person name="Agrawal R.K."/>
            <person name="Harvey S.C."/>
            <person name="Sali A."/>
            <person name="Chapman M.S."/>
            <person name="Frank J."/>
        </authorList>
    </citation>
    <scope>STRUCTURE BY ELECTRON MICROSCOPY (11.50 ANGSTROMS)</scope>
    <scope>SUBUNIT</scope>
    <source>
        <strain>MRE-600</strain>
    </source>
</reference>
<reference key="16">
    <citation type="journal article" date="2005" name="Science">
        <title>Structures of the bacterial ribosome at 3.5 A resolution.</title>
        <authorList>
            <person name="Schuwirth B.S."/>
            <person name="Borovinskaya M.A."/>
            <person name="Hau C.W."/>
            <person name="Zhang W."/>
            <person name="Vila-Sanjurjo A."/>
            <person name="Holton J.M."/>
            <person name="Cate J.H.D."/>
        </authorList>
    </citation>
    <scope>X-RAY CRYSTALLOGRAPHY (3.46 ANGSTROMS) OF 2 DIFFERENT RIBOSOME STRUCTURES</scope>
    <scope>SUBUNIT</scope>
    <source>
        <strain>MRE-600</strain>
    </source>
</reference>
<reference key="17">
    <citation type="journal article" date="2017" name="Nature">
        <title>Mechanistic insights into the alternative translation termination by ArfA and RF2.</title>
        <authorList>
            <person name="Ma C."/>
            <person name="Kurita D."/>
            <person name="Li N."/>
            <person name="Chen Y."/>
            <person name="Himeno H."/>
            <person name="Gao N."/>
        </authorList>
    </citation>
    <scope>STRUCTURE BY ELECTRON MICROSCOPY (3.0 ANGSTROMS) OF 70S RIBOSOME IN COMPLEX WITH ARFA AND RF2</scope>
    <scope>SUBUNIT</scope>
</reference>
<reference key="18">
    <citation type="journal article" date="2017" name="Nature">
        <title>Structural basis for ArfA-RF2-mediated translation termination on mRNAs lacking stop codons.</title>
        <authorList>
            <person name="Huter P."/>
            <person name="Mueller C."/>
            <person name="Beckert B."/>
            <person name="Arenz S."/>
            <person name="Berninghausen O."/>
            <person name="Beckmann R."/>
            <person name="Wilson D.N."/>
        </authorList>
    </citation>
    <scope>STRUCTURE BY ELECTRON MICROSCOPY (3.1 ANGSTROMS) OF 70S RIBOSOME IN COMPLEX WITH ARFA AND RF2</scope>
    <scope>SUBUNIT</scope>
</reference>
<reference key="19">
    <citation type="journal article" date="2016" name="Science">
        <title>Translational termination without a stop codon.</title>
        <authorList>
            <person name="James N.R."/>
            <person name="Brown A."/>
            <person name="Gordiyenko Y."/>
            <person name="Ramakrishnan V."/>
        </authorList>
    </citation>
    <scope>STRUCTURE BY ELECTRON MICROSCOPY (2.97 ANGSTROMS) OF 70S RIBOSOME IN COMPLEX WITH ARFA AND RF2</scope>
    <scope>SUBUNIT</scope>
</reference>
<reference key="20">
    <citation type="journal article" date="2017" name="Nature">
        <title>Structural basis of co-translational quality control by ArfA and RF2 bound to ribosome.</title>
        <authorList>
            <person name="Zeng F."/>
            <person name="Chen Y."/>
            <person name="Remis J."/>
            <person name="Shekhar M."/>
            <person name="Phillips J.C."/>
            <person name="Tajkhorshid E."/>
            <person name="Jin H."/>
        </authorList>
    </citation>
    <scope>STRUCTURE BY ELECTRON MICROSCOPY (3.52 ANGSTROMS) OF 70S RIBOSOME IN COMPLEX WITH ARFA AND RF2</scope>
    <scope>SUBUNIT</scope>
</reference>
<dbReference type="EMBL" id="X04022">
    <property type="protein sequence ID" value="CAA27652.1"/>
    <property type="status" value="ALT_SEQ"/>
    <property type="molecule type" value="Genomic_DNA"/>
</dbReference>
<dbReference type="EMBL" id="U14003">
    <property type="protein sequence ID" value="AAA97096.1"/>
    <property type="status" value="ALT_SEQ"/>
    <property type="molecule type" value="Genomic_DNA"/>
</dbReference>
<dbReference type="EMBL" id="U00096">
    <property type="protein sequence ID" value="AAC77157.5"/>
    <property type="status" value="ALT_SEQ"/>
    <property type="molecule type" value="Genomic_DNA"/>
</dbReference>
<dbReference type="EMBL" id="AP009048">
    <property type="protein sequence ID" value="BAE78201.1"/>
    <property type="status" value="ALT_SEQ"/>
    <property type="molecule type" value="Genomic_DNA"/>
</dbReference>
<dbReference type="PIR" id="C65231">
    <property type="entry name" value="R3EC6"/>
</dbReference>
<dbReference type="RefSeq" id="NP_418621.5">
    <property type="nucleotide sequence ID" value="NC_000913.3"/>
</dbReference>
<dbReference type="PDB" id="1EG0">
    <property type="method" value="EM"/>
    <property type="resolution" value="11.50 A"/>
    <property type="chains" value="C=1-97"/>
</dbReference>
<dbReference type="PDB" id="2YKR">
    <property type="method" value="EM"/>
    <property type="resolution" value="9.80 A"/>
    <property type="chains" value="F=1-100"/>
</dbReference>
<dbReference type="PDB" id="3IY8">
    <property type="method" value="EM"/>
    <property type="resolution" value="14.10 A"/>
    <property type="chains" value="F=2-100"/>
</dbReference>
<dbReference type="PDB" id="3J9Y">
    <property type="method" value="EM"/>
    <property type="resolution" value="3.90 A"/>
    <property type="chains" value="f=1-135"/>
</dbReference>
<dbReference type="PDB" id="3J9Z">
    <property type="method" value="EM"/>
    <property type="resolution" value="3.60 A"/>
    <property type="chains" value="SF=1-135"/>
</dbReference>
<dbReference type="PDB" id="3JA1">
    <property type="method" value="EM"/>
    <property type="resolution" value="3.60 A"/>
    <property type="chains" value="SF=1-135"/>
</dbReference>
<dbReference type="PDB" id="3JBU">
    <property type="method" value="EM"/>
    <property type="resolution" value="3.64 A"/>
    <property type="chains" value="F=1-131"/>
</dbReference>
<dbReference type="PDB" id="3JBV">
    <property type="method" value="EM"/>
    <property type="resolution" value="3.32 A"/>
    <property type="chains" value="F=1-131"/>
</dbReference>
<dbReference type="PDB" id="3JCD">
    <property type="method" value="EM"/>
    <property type="resolution" value="3.70 A"/>
    <property type="chains" value="f=1-135"/>
</dbReference>
<dbReference type="PDB" id="3JCE">
    <property type="method" value="EM"/>
    <property type="resolution" value="3.20 A"/>
    <property type="chains" value="f=1-135"/>
</dbReference>
<dbReference type="PDB" id="3JCJ">
    <property type="method" value="EM"/>
    <property type="resolution" value="3.70 A"/>
    <property type="chains" value="n=1-135"/>
</dbReference>
<dbReference type="PDB" id="3JCN">
    <property type="method" value="EM"/>
    <property type="resolution" value="4.60 A"/>
    <property type="chains" value="i=1-135"/>
</dbReference>
<dbReference type="PDB" id="4A2I">
    <property type="method" value="EM"/>
    <property type="resolution" value="16.50 A"/>
    <property type="chains" value="F=1-100"/>
</dbReference>
<dbReference type="PDB" id="4ADV">
    <property type="method" value="EM"/>
    <property type="resolution" value="13.50 A"/>
    <property type="chains" value="F=1-135"/>
</dbReference>
<dbReference type="PDB" id="4U1U">
    <property type="method" value="X-ray"/>
    <property type="resolution" value="2.95 A"/>
    <property type="chains" value="AF/CF=1-100"/>
</dbReference>
<dbReference type="PDB" id="4U1V">
    <property type="method" value="X-ray"/>
    <property type="resolution" value="3.00 A"/>
    <property type="chains" value="AF/CF=1-100"/>
</dbReference>
<dbReference type="PDB" id="4U20">
    <property type="method" value="X-ray"/>
    <property type="resolution" value="2.90 A"/>
    <property type="chains" value="AF/CF=1-100"/>
</dbReference>
<dbReference type="PDB" id="4U24">
    <property type="method" value="X-ray"/>
    <property type="resolution" value="2.90 A"/>
    <property type="chains" value="AF/CF=1-100"/>
</dbReference>
<dbReference type="PDB" id="4U25">
    <property type="method" value="X-ray"/>
    <property type="resolution" value="2.90 A"/>
    <property type="chains" value="AF/CF=1-100"/>
</dbReference>
<dbReference type="PDB" id="4U26">
    <property type="method" value="X-ray"/>
    <property type="resolution" value="2.80 A"/>
    <property type="chains" value="AF/CF=1-100"/>
</dbReference>
<dbReference type="PDB" id="4U27">
    <property type="method" value="X-ray"/>
    <property type="resolution" value="2.80 A"/>
    <property type="chains" value="AF/CF=1-100"/>
</dbReference>
<dbReference type="PDB" id="4V47">
    <property type="method" value="EM"/>
    <property type="resolution" value="12.30 A"/>
    <property type="chains" value="BF=1-135"/>
</dbReference>
<dbReference type="PDB" id="4V48">
    <property type="method" value="EM"/>
    <property type="resolution" value="11.50 A"/>
    <property type="chains" value="BF=1-135"/>
</dbReference>
<dbReference type="PDB" id="4V4H">
    <property type="method" value="X-ray"/>
    <property type="resolution" value="3.46 A"/>
    <property type="chains" value="AF/CF=1-135"/>
</dbReference>
<dbReference type="PDB" id="4V4Q">
    <property type="method" value="X-ray"/>
    <property type="resolution" value="3.46 A"/>
    <property type="chains" value="AF/CF=1-135"/>
</dbReference>
<dbReference type="PDB" id="4V4V">
    <property type="method" value="EM"/>
    <property type="resolution" value="15.00 A"/>
    <property type="chains" value="AF=1-95"/>
</dbReference>
<dbReference type="PDB" id="4V4W">
    <property type="method" value="EM"/>
    <property type="resolution" value="15.00 A"/>
    <property type="chains" value="AF=1-95"/>
</dbReference>
<dbReference type="PDB" id="4V50">
    <property type="method" value="X-ray"/>
    <property type="resolution" value="3.22 A"/>
    <property type="chains" value="AF/CF=1-135"/>
</dbReference>
<dbReference type="PDB" id="4V52">
    <property type="method" value="X-ray"/>
    <property type="resolution" value="3.21 A"/>
    <property type="chains" value="AF/CF=1-135"/>
</dbReference>
<dbReference type="PDB" id="4V53">
    <property type="method" value="X-ray"/>
    <property type="resolution" value="3.54 A"/>
    <property type="chains" value="AF/CF=1-135"/>
</dbReference>
<dbReference type="PDB" id="4V54">
    <property type="method" value="X-ray"/>
    <property type="resolution" value="3.30 A"/>
    <property type="chains" value="AF/CF=1-135"/>
</dbReference>
<dbReference type="PDB" id="4V55">
    <property type="method" value="X-ray"/>
    <property type="resolution" value="4.00 A"/>
    <property type="chains" value="AF/CF=1-135"/>
</dbReference>
<dbReference type="PDB" id="4V56">
    <property type="method" value="X-ray"/>
    <property type="resolution" value="3.93 A"/>
    <property type="chains" value="AF/CF=1-135"/>
</dbReference>
<dbReference type="PDB" id="4V57">
    <property type="method" value="X-ray"/>
    <property type="resolution" value="3.50 A"/>
    <property type="chains" value="AF/CF=1-135"/>
</dbReference>
<dbReference type="PDB" id="4V5B">
    <property type="method" value="X-ray"/>
    <property type="resolution" value="3.74 A"/>
    <property type="chains" value="BF/DF=1-135"/>
</dbReference>
<dbReference type="PDB" id="4V5H">
    <property type="method" value="EM"/>
    <property type="resolution" value="5.80 A"/>
    <property type="chains" value="AF=1-100"/>
</dbReference>
<dbReference type="PDB" id="4V5Y">
    <property type="method" value="X-ray"/>
    <property type="resolution" value="4.45 A"/>
    <property type="chains" value="AF/CF=1-135"/>
</dbReference>
<dbReference type="PDB" id="4V64">
    <property type="method" value="X-ray"/>
    <property type="resolution" value="3.50 A"/>
    <property type="chains" value="AF/CF=1-135"/>
</dbReference>
<dbReference type="PDB" id="4V65">
    <property type="method" value="EM"/>
    <property type="resolution" value="9.00 A"/>
    <property type="chains" value="AT=1-135"/>
</dbReference>
<dbReference type="PDB" id="4V66">
    <property type="method" value="EM"/>
    <property type="resolution" value="9.00 A"/>
    <property type="chains" value="AT=1-135"/>
</dbReference>
<dbReference type="PDB" id="4V69">
    <property type="method" value="EM"/>
    <property type="resolution" value="6.70 A"/>
    <property type="chains" value="AF=1-100"/>
</dbReference>
<dbReference type="PDB" id="4V6C">
    <property type="method" value="X-ray"/>
    <property type="resolution" value="3.19 A"/>
    <property type="chains" value="AF/CF=1-135"/>
</dbReference>
<dbReference type="PDB" id="4V6D">
    <property type="method" value="X-ray"/>
    <property type="resolution" value="3.81 A"/>
    <property type="chains" value="AF/CF=1-135"/>
</dbReference>
<dbReference type="PDB" id="4V6E">
    <property type="method" value="X-ray"/>
    <property type="resolution" value="3.71 A"/>
    <property type="chains" value="AF/CF=1-135"/>
</dbReference>
<dbReference type="PDB" id="4V6K">
    <property type="method" value="EM"/>
    <property type="resolution" value="8.25 A"/>
    <property type="chains" value="BJ=1-135"/>
</dbReference>
<dbReference type="PDB" id="4V6L">
    <property type="method" value="EM"/>
    <property type="resolution" value="13.20 A"/>
    <property type="chains" value="AJ=1-135"/>
</dbReference>
<dbReference type="PDB" id="4V6M">
    <property type="method" value="EM"/>
    <property type="resolution" value="7.10 A"/>
    <property type="chains" value="AF=1-135"/>
</dbReference>
<dbReference type="PDB" id="4V6N">
    <property type="method" value="EM"/>
    <property type="resolution" value="12.10 A"/>
    <property type="chains" value="BI=1-135"/>
</dbReference>
<dbReference type="PDB" id="4V6O">
    <property type="method" value="EM"/>
    <property type="resolution" value="14.70 A"/>
    <property type="chains" value="AI=1-135"/>
</dbReference>
<dbReference type="PDB" id="4V6P">
    <property type="method" value="EM"/>
    <property type="resolution" value="13.50 A"/>
    <property type="chains" value="AI=1-135"/>
</dbReference>
<dbReference type="PDB" id="4V6Q">
    <property type="method" value="EM"/>
    <property type="resolution" value="11.50 A"/>
    <property type="chains" value="AI=1-135"/>
</dbReference>
<dbReference type="PDB" id="4V6R">
    <property type="method" value="EM"/>
    <property type="resolution" value="11.50 A"/>
    <property type="chains" value="AI=1-135"/>
</dbReference>
<dbReference type="PDB" id="4V6S">
    <property type="method" value="EM"/>
    <property type="resolution" value="13.10 A"/>
    <property type="chains" value="BH=1-135"/>
</dbReference>
<dbReference type="PDB" id="4V6T">
    <property type="method" value="EM"/>
    <property type="resolution" value="8.30 A"/>
    <property type="chains" value="AF=1-100"/>
</dbReference>
<dbReference type="PDB" id="4V6V">
    <property type="method" value="EM"/>
    <property type="resolution" value="9.80 A"/>
    <property type="chains" value="AF=1-135"/>
</dbReference>
<dbReference type="PDB" id="4V6Y">
    <property type="method" value="EM"/>
    <property type="resolution" value="12.00 A"/>
    <property type="chains" value="AF=1-100"/>
</dbReference>
<dbReference type="PDB" id="4V6Z">
    <property type="method" value="EM"/>
    <property type="resolution" value="12.00 A"/>
    <property type="chains" value="AF=1-100"/>
</dbReference>
<dbReference type="PDB" id="4V70">
    <property type="method" value="EM"/>
    <property type="resolution" value="17.00 A"/>
    <property type="chains" value="AF=1-100"/>
</dbReference>
<dbReference type="PDB" id="4V71">
    <property type="method" value="EM"/>
    <property type="resolution" value="20.00 A"/>
    <property type="chains" value="AF=1-100"/>
</dbReference>
<dbReference type="PDB" id="4V72">
    <property type="method" value="EM"/>
    <property type="resolution" value="13.00 A"/>
    <property type="chains" value="AF=1-100"/>
</dbReference>
<dbReference type="PDB" id="4V73">
    <property type="method" value="EM"/>
    <property type="resolution" value="15.00 A"/>
    <property type="chains" value="AF=1-100"/>
</dbReference>
<dbReference type="PDB" id="4V74">
    <property type="method" value="EM"/>
    <property type="resolution" value="17.00 A"/>
    <property type="chains" value="AF=1-100"/>
</dbReference>
<dbReference type="PDB" id="4V75">
    <property type="method" value="EM"/>
    <property type="resolution" value="12.00 A"/>
    <property type="chains" value="AF=1-100"/>
</dbReference>
<dbReference type="PDB" id="4V76">
    <property type="method" value="EM"/>
    <property type="resolution" value="17.00 A"/>
    <property type="chains" value="AF=1-100"/>
</dbReference>
<dbReference type="PDB" id="4V77">
    <property type="method" value="EM"/>
    <property type="resolution" value="17.00 A"/>
    <property type="chains" value="AF=1-100"/>
</dbReference>
<dbReference type="PDB" id="4V78">
    <property type="method" value="EM"/>
    <property type="resolution" value="20.00 A"/>
    <property type="chains" value="AF=1-100"/>
</dbReference>
<dbReference type="PDB" id="4V79">
    <property type="method" value="EM"/>
    <property type="resolution" value="15.00 A"/>
    <property type="chains" value="AF=1-100"/>
</dbReference>
<dbReference type="PDB" id="4V7A">
    <property type="method" value="EM"/>
    <property type="resolution" value="9.00 A"/>
    <property type="chains" value="AF=1-100"/>
</dbReference>
<dbReference type="PDB" id="4V7B">
    <property type="method" value="EM"/>
    <property type="resolution" value="6.80 A"/>
    <property type="chains" value="AF=1-135"/>
</dbReference>
<dbReference type="PDB" id="4V7C">
    <property type="method" value="EM"/>
    <property type="resolution" value="7.60 A"/>
    <property type="chains" value="AF=1-131"/>
</dbReference>
<dbReference type="PDB" id="4V7D">
    <property type="method" value="EM"/>
    <property type="resolution" value="7.60 A"/>
    <property type="chains" value="BF=1-131"/>
</dbReference>
<dbReference type="PDB" id="4V7I">
    <property type="method" value="EM"/>
    <property type="resolution" value="9.60 A"/>
    <property type="chains" value="BF=1-135"/>
</dbReference>
<dbReference type="PDB" id="4V7S">
    <property type="method" value="X-ray"/>
    <property type="resolution" value="3.25 A"/>
    <property type="chains" value="AF/CF=1-100"/>
</dbReference>
<dbReference type="PDB" id="4V7T">
    <property type="method" value="X-ray"/>
    <property type="resolution" value="3.19 A"/>
    <property type="chains" value="AF/CF=1-100"/>
</dbReference>
<dbReference type="PDB" id="4V7U">
    <property type="method" value="X-ray"/>
    <property type="resolution" value="3.10 A"/>
    <property type="chains" value="AF/CF=1-100"/>
</dbReference>
<dbReference type="PDB" id="4V7V">
    <property type="method" value="X-ray"/>
    <property type="resolution" value="3.29 A"/>
    <property type="chains" value="AF/CF=1-100"/>
</dbReference>
<dbReference type="PDB" id="4V85">
    <property type="method" value="X-ray"/>
    <property type="resolution" value="3.20 A"/>
    <property type="chains" value="AF=1-131"/>
</dbReference>
<dbReference type="PDB" id="4V89">
    <property type="method" value="X-ray"/>
    <property type="resolution" value="3.70 A"/>
    <property type="chains" value="AF=1-135"/>
</dbReference>
<dbReference type="PDB" id="4V9C">
    <property type="method" value="X-ray"/>
    <property type="resolution" value="3.30 A"/>
    <property type="chains" value="AF/CF=1-135"/>
</dbReference>
<dbReference type="PDB" id="4V9D">
    <property type="method" value="X-ray"/>
    <property type="resolution" value="3.00 A"/>
    <property type="chains" value="AF/BF=1-100"/>
</dbReference>
<dbReference type="PDB" id="4V9O">
    <property type="method" value="X-ray"/>
    <property type="resolution" value="2.90 A"/>
    <property type="chains" value="BF/DF/FF/HF=1-135"/>
</dbReference>
<dbReference type="PDB" id="4V9P">
    <property type="method" value="X-ray"/>
    <property type="resolution" value="2.90 A"/>
    <property type="chains" value="BF/DF/FF/HF=1-135"/>
</dbReference>
<dbReference type="PDB" id="4WF1">
    <property type="method" value="X-ray"/>
    <property type="resolution" value="3.09 A"/>
    <property type="chains" value="AF/CF=1-100"/>
</dbReference>
<dbReference type="PDB" id="4WOI">
    <property type="method" value="X-ray"/>
    <property type="resolution" value="3.00 A"/>
    <property type="chains" value="AF/DF=1-135"/>
</dbReference>
<dbReference type="PDB" id="4WWW">
    <property type="method" value="X-ray"/>
    <property type="resolution" value="3.10 A"/>
    <property type="chains" value="QF/XF=1-100"/>
</dbReference>
<dbReference type="PDB" id="4YBB">
    <property type="method" value="X-ray"/>
    <property type="resolution" value="2.10 A"/>
    <property type="chains" value="AF/BF=1-106"/>
</dbReference>
<dbReference type="PDB" id="5AFI">
    <property type="method" value="EM"/>
    <property type="resolution" value="2.90 A"/>
    <property type="chains" value="f=1-135"/>
</dbReference>
<dbReference type="PDB" id="5H5U">
    <property type="method" value="EM"/>
    <property type="resolution" value="3.00 A"/>
    <property type="chains" value="m=1-135"/>
</dbReference>
<dbReference type="PDB" id="5IQR">
    <property type="method" value="EM"/>
    <property type="resolution" value="3.00 A"/>
    <property type="chains" value="k=1-135"/>
</dbReference>
<dbReference type="PDB" id="5IT8">
    <property type="method" value="X-ray"/>
    <property type="resolution" value="3.12 A"/>
    <property type="chains" value="AF/BF=1-106"/>
</dbReference>
<dbReference type="PDB" id="5J5B">
    <property type="method" value="X-ray"/>
    <property type="resolution" value="2.80 A"/>
    <property type="chains" value="AF/BF=1-106"/>
</dbReference>
<dbReference type="PDB" id="5J7L">
    <property type="method" value="X-ray"/>
    <property type="resolution" value="3.00 A"/>
    <property type="chains" value="AF/BF=1-106"/>
</dbReference>
<dbReference type="PDB" id="5J88">
    <property type="method" value="X-ray"/>
    <property type="resolution" value="3.32 A"/>
    <property type="chains" value="AF/BF=1-106"/>
</dbReference>
<dbReference type="PDB" id="5J8A">
    <property type="method" value="X-ray"/>
    <property type="resolution" value="3.10 A"/>
    <property type="chains" value="AF/BF=1-106"/>
</dbReference>
<dbReference type="PDB" id="5J91">
    <property type="method" value="X-ray"/>
    <property type="resolution" value="2.96 A"/>
    <property type="chains" value="AF/BF=1-106"/>
</dbReference>
<dbReference type="PDB" id="5JC9">
    <property type="method" value="X-ray"/>
    <property type="resolution" value="3.03 A"/>
    <property type="chains" value="AF/BF=1-106"/>
</dbReference>
<dbReference type="PDB" id="5JTE">
    <property type="method" value="EM"/>
    <property type="resolution" value="3.60 A"/>
    <property type="chains" value="AF=1-135"/>
</dbReference>
<dbReference type="PDB" id="5JU8">
    <property type="method" value="EM"/>
    <property type="resolution" value="3.60 A"/>
    <property type="chains" value="AF=1-135"/>
</dbReference>
<dbReference type="PDB" id="5KCR">
    <property type="method" value="EM"/>
    <property type="resolution" value="3.60 A"/>
    <property type="chains" value="1f=1-135"/>
</dbReference>
<dbReference type="PDB" id="5KCS">
    <property type="method" value="EM"/>
    <property type="resolution" value="3.90 A"/>
    <property type="chains" value="1f=1-135"/>
</dbReference>
<dbReference type="PDB" id="5KPS">
    <property type="method" value="EM"/>
    <property type="resolution" value="3.90 A"/>
    <property type="chains" value="11=1-135"/>
</dbReference>
<dbReference type="PDB" id="5KPV">
    <property type="method" value="EM"/>
    <property type="resolution" value="4.10 A"/>
    <property type="chains" value="10=1-135"/>
</dbReference>
<dbReference type="PDB" id="5KPW">
    <property type="method" value="EM"/>
    <property type="resolution" value="3.90 A"/>
    <property type="chains" value="10=1-135"/>
</dbReference>
<dbReference type="PDB" id="5KPX">
    <property type="method" value="EM"/>
    <property type="resolution" value="3.90 A"/>
    <property type="chains" value="10=1-135"/>
</dbReference>
<dbReference type="PDB" id="5L3P">
    <property type="method" value="EM"/>
    <property type="resolution" value="3.70 A"/>
    <property type="chains" value="f=1-135"/>
</dbReference>
<dbReference type="PDB" id="5LZA">
    <property type="method" value="EM"/>
    <property type="resolution" value="3.60 A"/>
    <property type="chains" value="f=1-100"/>
</dbReference>
<dbReference type="PDB" id="5LZB">
    <property type="method" value="EM"/>
    <property type="resolution" value="5.30 A"/>
    <property type="chains" value="f=1-100"/>
</dbReference>
<dbReference type="PDB" id="5LZC">
    <property type="method" value="EM"/>
    <property type="resolution" value="4.80 A"/>
    <property type="chains" value="f=1-100"/>
</dbReference>
<dbReference type="PDB" id="5LZD">
    <property type="method" value="EM"/>
    <property type="resolution" value="3.40 A"/>
    <property type="chains" value="f=1-100"/>
</dbReference>
<dbReference type="PDB" id="5LZE">
    <property type="method" value="EM"/>
    <property type="resolution" value="3.50 A"/>
    <property type="chains" value="f=1-100"/>
</dbReference>
<dbReference type="PDB" id="5LZF">
    <property type="method" value="EM"/>
    <property type="resolution" value="4.60 A"/>
    <property type="chains" value="f=1-100"/>
</dbReference>
<dbReference type="PDB" id="5MDV">
    <property type="method" value="EM"/>
    <property type="resolution" value="2.97 A"/>
    <property type="chains" value="k=1-135"/>
</dbReference>
<dbReference type="PDB" id="5MDW">
    <property type="method" value="EM"/>
    <property type="resolution" value="3.06 A"/>
    <property type="chains" value="k=1-135"/>
</dbReference>
<dbReference type="PDB" id="5MDY">
    <property type="method" value="EM"/>
    <property type="resolution" value="3.35 A"/>
    <property type="chains" value="k=1-135"/>
</dbReference>
<dbReference type="PDB" id="5MDZ">
    <property type="method" value="EM"/>
    <property type="resolution" value="3.10 A"/>
    <property type="chains" value="k=1-135"/>
</dbReference>
<dbReference type="PDB" id="5ME0">
    <property type="method" value="EM"/>
    <property type="resolution" value="13.50 A"/>
    <property type="chains" value="F=1-131"/>
</dbReference>
<dbReference type="PDB" id="5ME1">
    <property type="method" value="EM"/>
    <property type="resolution" value="13.50 A"/>
    <property type="chains" value="F=1-131"/>
</dbReference>
<dbReference type="PDB" id="5MGP">
    <property type="method" value="EM"/>
    <property type="resolution" value="3.10 A"/>
    <property type="chains" value="f=1-100"/>
</dbReference>
<dbReference type="PDB" id="5MY1">
    <property type="method" value="EM"/>
    <property type="resolution" value="7.60 A"/>
    <property type="chains" value="F=1-135"/>
</dbReference>
<dbReference type="PDB" id="5NO2">
    <property type="method" value="EM"/>
    <property type="resolution" value="5.16 A"/>
    <property type="chains" value="F=1-106"/>
</dbReference>
<dbReference type="PDB" id="5NO3">
    <property type="method" value="EM"/>
    <property type="resolution" value="5.16 A"/>
    <property type="chains" value="F=1-106"/>
</dbReference>
<dbReference type="PDB" id="5NO4">
    <property type="method" value="EM"/>
    <property type="resolution" value="5.16 A"/>
    <property type="chains" value="F=1-106"/>
</dbReference>
<dbReference type="PDB" id="5NP6">
    <property type="method" value="EM"/>
    <property type="resolution" value="3.60 A"/>
    <property type="chains" value="I=1-100"/>
</dbReference>
<dbReference type="PDB" id="5NWY">
    <property type="method" value="EM"/>
    <property type="resolution" value="2.93 A"/>
    <property type="chains" value="5=1-131"/>
</dbReference>
<dbReference type="PDB" id="5O2R">
    <property type="method" value="EM"/>
    <property type="resolution" value="3.40 A"/>
    <property type="chains" value="f=1-100"/>
</dbReference>
<dbReference type="PDB" id="5U4I">
    <property type="method" value="EM"/>
    <property type="resolution" value="3.50 A"/>
    <property type="chains" value="f=1-135"/>
</dbReference>
<dbReference type="PDB" id="5U9F">
    <property type="method" value="EM"/>
    <property type="resolution" value="3.20 A"/>
    <property type="chains" value="F=1-131"/>
</dbReference>
<dbReference type="PDB" id="5U9G">
    <property type="method" value="EM"/>
    <property type="resolution" value="3.20 A"/>
    <property type="chains" value="F=1-131"/>
</dbReference>
<dbReference type="PDB" id="5UYK">
    <property type="method" value="EM"/>
    <property type="resolution" value="3.90 A"/>
    <property type="chains" value="F=1-100"/>
</dbReference>
<dbReference type="PDB" id="5UYL">
    <property type="method" value="EM"/>
    <property type="resolution" value="3.60 A"/>
    <property type="chains" value="F=1-100"/>
</dbReference>
<dbReference type="PDB" id="5UYM">
    <property type="method" value="EM"/>
    <property type="resolution" value="3.20 A"/>
    <property type="chains" value="F=1-100"/>
</dbReference>
<dbReference type="PDB" id="5UYN">
    <property type="method" value="EM"/>
    <property type="resolution" value="4.00 A"/>
    <property type="chains" value="F=1-100"/>
</dbReference>
<dbReference type="PDB" id="5UYP">
    <property type="method" value="EM"/>
    <property type="resolution" value="3.90 A"/>
    <property type="chains" value="F=1-100"/>
</dbReference>
<dbReference type="PDB" id="5UYQ">
    <property type="method" value="EM"/>
    <property type="resolution" value="3.80 A"/>
    <property type="chains" value="F=1-100"/>
</dbReference>
<dbReference type="PDB" id="5UZ4">
    <property type="method" value="EM"/>
    <property type="resolution" value="5.80 A"/>
    <property type="chains" value="F=1-131"/>
</dbReference>
<dbReference type="PDB" id="5WDT">
    <property type="method" value="EM"/>
    <property type="resolution" value="3.00 A"/>
    <property type="chains" value="f=1-100"/>
</dbReference>
<dbReference type="PDB" id="5WE4">
    <property type="method" value="EM"/>
    <property type="resolution" value="3.10 A"/>
    <property type="chains" value="f=1-100"/>
</dbReference>
<dbReference type="PDB" id="5WE6">
    <property type="method" value="EM"/>
    <property type="resolution" value="3.40 A"/>
    <property type="chains" value="f=1-100"/>
</dbReference>
<dbReference type="PDB" id="5WF0">
    <property type="method" value="EM"/>
    <property type="resolution" value="3.60 A"/>
    <property type="chains" value="f=1-100"/>
</dbReference>
<dbReference type="PDB" id="5WFK">
    <property type="method" value="EM"/>
    <property type="resolution" value="3.40 A"/>
    <property type="chains" value="f=1-100"/>
</dbReference>
<dbReference type="PDB" id="5WFS">
    <property type="method" value="EM"/>
    <property type="resolution" value="3.00 A"/>
    <property type="chains" value="f=1-100"/>
</dbReference>
<dbReference type="PDB" id="6AWB">
    <property type="method" value="EM"/>
    <property type="resolution" value="6.70 A"/>
    <property type="chains" value="I=1-100"/>
</dbReference>
<dbReference type="PDB" id="6AWC">
    <property type="method" value="EM"/>
    <property type="resolution" value="7.90 A"/>
    <property type="chains" value="I=1-100"/>
</dbReference>
<dbReference type="PDB" id="6AWD">
    <property type="method" value="EM"/>
    <property type="resolution" value="8.10 A"/>
    <property type="chains" value="I=1-100"/>
</dbReference>
<dbReference type="PDB" id="6BU8">
    <property type="method" value="EM"/>
    <property type="resolution" value="3.50 A"/>
    <property type="chains" value="F=1-126"/>
</dbReference>
<dbReference type="PDB" id="6BY1">
    <property type="method" value="X-ray"/>
    <property type="resolution" value="3.94 A"/>
    <property type="chains" value="AF/BF=1-100"/>
</dbReference>
<dbReference type="PDB" id="6C4I">
    <property type="method" value="EM"/>
    <property type="resolution" value="3.24 A"/>
    <property type="chains" value="f=1-135"/>
</dbReference>
<dbReference type="PDB" id="6DNC">
    <property type="method" value="EM"/>
    <property type="resolution" value="3.70 A"/>
    <property type="chains" value="SA=1-131"/>
</dbReference>
<dbReference type="PDB" id="6ENF">
    <property type="method" value="EM"/>
    <property type="resolution" value="3.20 A"/>
    <property type="chains" value="f=1-100"/>
</dbReference>
<dbReference type="PDB" id="6ENJ">
    <property type="method" value="EM"/>
    <property type="resolution" value="3.70 A"/>
    <property type="chains" value="f=1-100"/>
</dbReference>
<dbReference type="PDB" id="6ENU">
    <property type="method" value="EM"/>
    <property type="resolution" value="3.10 A"/>
    <property type="chains" value="f=1-100"/>
</dbReference>
<dbReference type="PDB" id="6GWT">
    <property type="method" value="EM"/>
    <property type="resolution" value="3.80 A"/>
    <property type="chains" value="f=1-100"/>
</dbReference>
<dbReference type="PDB" id="6GXM">
    <property type="method" value="EM"/>
    <property type="resolution" value="3.80 A"/>
    <property type="chains" value="f=1-100"/>
</dbReference>
<dbReference type="PDB" id="6GXN">
    <property type="method" value="EM"/>
    <property type="resolution" value="3.90 A"/>
    <property type="chains" value="f=1-100"/>
</dbReference>
<dbReference type="PDB" id="6GXO">
    <property type="method" value="EM"/>
    <property type="resolution" value="3.90 A"/>
    <property type="chains" value="f=1-100"/>
</dbReference>
<dbReference type="PDB" id="6GXP">
    <property type="method" value="EM"/>
    <property type="resolution" value="4.40 A"/>
    <property type="chains" value="f=1-100"/>
</dbReference>
<dbReference type="PDB" id="6H4N">
    <property type="method" value="EM"/>
    <property type="resolution" value="3.00 A"/>
    <property type="chains" value="f=1-100"/>
</dbReference>
<dbReference type="PDB" id="6H58">
    <property type="method" value="EM"/>
    <property type="resolution" value="7.90 A"/>
    <property type="chains" value="f/ff=1-100"/>
</dbReference>
<dbReference type="PDB" id="6HRM">
    <property type="method" value="EM"/>
    <property type="resolution" value="2.96 A"/>
    <property type="chains" value="k=1-104"/>
</dbReference>
<dbReference type="PDB" id="6I7V">
    <property type="method" value="X-ray"/>
    <property type="resolution" value="2.90 A"/>
    <property type="chains" value="AF/BF=1-100"/>
</dbReference>
<dbReference type="PDB" id="6NQB">
    <property type="method" value="EM"/>
    <property type="resolution" value="3.80 A"/>
    <property type="chains" value="F=1-93"/>
</dbReference>
<dbReference type="PDB" id="6O7K">
    <property type="method" value="EM"/>
    <property type="resolution" value="4.20 A"/>
    <property type="chains" value="n=1-100"/>
</dbReference>
<dbReference type="PDB" id="6O9J">
    <property type="method" value="EM"/>
    <property type="resolution" value="3.90 A"/>
    <property type="chains" value="f=1-100"/>
</dbReference>
<dbReference type="PDB" id="6O9K">
    <property type="method" value="EM"/>
    <property type="resolution" value="4.00 A"/>
    <property type="chains" value="f=1-100"/>
</dbReference>
<dbReference type="PDB" id="6OFX">
    <property type="method" value="EM"/>
    <property type="resolution" value="3.30 A"/>
    <property type="chains" value="K=1-101"/>
</dbReference>
<dbReference type="PDB" id="6OG7">
    <property type="method" value="EM"/>
    <property type="resolution" value="3.30 A"/>
    <property type="chains" value="K=1-101"/>
</dbReference>
<dbReference type="PDB" id="6OGF">
    <property type="method" value="EM"/>
    <property type="resolution" value="3.90 A"/>
    <property type="chains" value="K=1-131"/>
</dbReference>
<dbReference type="PDB" id="6OGG">
    <property type="method" value="EM"/>
    <property type="resolution" value="4.20 A"/>
    <property type="chains" value="K=1-131"/>
</dbReference>
<dbReference type="PDB" id="6OGI">
    <property type="method" value="EM"/>
    <property type="resolution" value="3.40 A"/>
    <property type="chains" value="K=1-131"/>
</dbReference>
<dbReference type="PDB" id="6OM6">
    <property type="method" value="EM"/>
    <property type="resolution" value="3.10 A"/>
    <property type="chains" value="k=1-135"/>
</dbReference>
<dbReference type="PDB" id="6ORE">
    <property type="method" value="EM"/>
    <property type="resolution" value="2.90 A"/>
    <property type="chains" value="k=1-104"/>
</dbReference>
<dbReference type="PDB" id="6ORL">
    <property type="method" value="EM"/>
    <property type="resolution" value="3.50 A"/>
    <property type="chains" value="k=1-104"/>
</dbReference>
<dbReference type="PDB" id="6OSK">
    <property type="method" value="EM"/>
    <property type="resolution" value="3.60 A"/>
    <property type="chains" value="k=1-104"/>
</dbReference>
<dbReference type="PDB" id="6OSQ">
    <property type="method" value="EM"/>
    <property type="resolution" value="3.50 A"/>
    <property type="chains" value="k=1-104"/>
</dbReference>
<dbReference type="PDB" id="6OST">
    <property type="method" value="EM"/>
    <property type="resolution" value="4.20 A"/>
    <property type="chains" value="k=1-104"/>
</dbReference>
<dbReference type="PDB" id="6OT3">
    <property type="method" value="EM"/>
    <property type="resolution" value="3.90 A"/>
    <property type="chains" value="k=1-104"/>
</dbReference>
<dbReference type="PDB" id="6OUO">
    <property type="method" value="EM"/>
    <property type="resolution" value="3.70 A"/>
    <property type="chains" value="k=1-104"/>
</dbReference>
<dbReference type="PDB" id="6Q97">
    <property type="method" value="EM"/>
    <property type="resolution" value="3.90 A"/>
    <property type="chains" value="k=1-104"/>
</dbReference>
<dbReference type="PDB" id="6Q98">
    <property type="method" value="EM"/>
    <property type="resolution" value="4.30 A"/>
    <property type="chains" value="k=1-135"/>
</dbReference>
<dbReference type="PDB" id="6Q9A">
    <property type="method" value="EM"/>
    <property type="resolution" value="3.70 A"/>
    <property type="chains" value="k=1-104"/>
</dbReference>
<dbReference type="PDB" id="6SZS">
    <property type="method" value="EM"/>
    <property type="resolution" value="3.06 A"/>
    <property type="chains" value="f=1-135"/>
</dbReference>
<dbReference type="PDB" id="6TBV">
    <property type="method" value="EM"/>
    <property type="resolution" value="2.70 A"/>
    <property type="chains" value="S061=1-135"/>
</dbReference>
<dbReference type="PDB" id="6TC3">
    <property type="method" value="EM"/>
    <property type="resolution" value="2.70 A"/>
    <property type="chains" value="S061=1-135"/>
</dbReference>
<dbReference type="PDB" id="6VU3">
    <property type="method" value="EM"/>
    <property type="resolution" value="3.70 A"/>
    <property type="chains" value="L=1-104"/>
</dbReference>
<dbReference type="PDB" id="6VWL">
    <property type="method" value="EM"/>
    <property type="resolution" value="3.10 A"/>
    <property type="chains" value="e=1-135"/>
</dbReference>
<dbReference type="PDB" id="6VWM">
    <property type="method" value="EM"/>
    <property type="resolution" value="3.40 A"/>
    <property type="chains" value="e=1-135"/>
</dbReference>
<dbReference type="PDB" id="6VWN">
    <property type="method" value="EM"/>
    <property type="resolution" value="3.40 A"/>
    <property type="chains" value="e=1-135"/>
</dbReference>
<dbReference type="PDB" id="6VYQ">
    <property type="method" value="EM"/>
    <property type="resolution" value="3.70 A"/>
    <property type="chains" value="L=1-135"/>
</dbReference>
<dbReference type="PDB" id="6VYR">
    <property type="method" value="EM"/>
    <property type="resolution" value="3.80 A"/>
    <property type="chains" value="L=1-135"/>
</dbReference>
<dbReference type="PDB" id="6VYS">
    <property type="method" value="EM"/>
    <property type="resolution" value="3.70 A"/>
    <property type="chains" value="L=1-135"/>
</dbReference>
<dbReference type="PDB" id="6VYT">
    <property type="method" value="EM"/>
    <property type="resolution" value="14.00 A"/>
    <property type="chains" value="L=1-135"/>
</dbReference>
<dbReference type="PDB" id="6VYU">
    <property type="method" value="EM"/>
    <property type="resolution" value="7.00 A"/>
    <property type="chains" value="L=1-135"/>
</dbReference>
<dbReference type="PDB" id="6VYW">
    <property type="method" value="EM"/>
    <property type="resolution" value="7.00 A"/>
    <property type="chains" value="L=1-104"/>
</dbReference>
<dbReference type="PDB" id="6VYX">
    <property type="method" value="EM"/>
    <property type="resolution" value="9.90 A"/>
    <property type="chains" value="L=1-135"/>
</dbReference>
<dbReference type="PDB" id="6VYY">
    <property type="method" value="EM"/>
    <property type="resolution" value="9.90 A"/>
    <property type="chains" value="L=1-135"/>
</dbReference>
<dbReference type="PDB" id="6VYZ">
    <property type="method" value="EM"/>
    <property type="resolution" value="9.90 A"/>
    <property type="chains" value="L=1-135"/>
</dbReference>
<dbReference type="PDB" id="6VZ2">
    <property type="method" value="EM"/>
    <property type="resolution" value="10.00 A"/>
    <property type="chains" value="L=1-135"/>
</dbReference>
<dbReference type="PDB" id="6VZ3">
    <property type="method" value="EM"/>
    <property type="resolution" value="8.90 A"/>
    <property type="chains" value="L=1-104"/>
</dbReference>
<dbReference type="PDB" id="6VZ5">
    <property type="method" value="EM"/>
    <property type="resolution" value="8.90 A"/>
    <property type="chains" value="L=1-135"/>
</dbReference>
<dbReference type="PDB" id="6VZ7">
    <property type="method" value="EM"/>
    <property type="resolution" value="7.00 A"/>
    <property type="chains" value="L=1-104"/>
</dbReference>
<dbReference type="PDB" id="6VZJ">
    <property type="method" value="EM"/>
    <property type="resolution" value="4.10 A"/>
    <property type="chains" value="L=1-135"/>
</dbReference>
<dbReference type="PDB" id="6W6K">
    <property type="method" value="EM"/>
    <property type="resolution" value="3.60 A"/>
    <property type="chains" value="F=1-135"/>
</dbReference>
<dbReference type="PDB" id="6W77">
    <property type="method" value="EM"/>
    <property type="resolution" value="3.60 A"/>
    <property type="chains" value="F=1-135"/>
</dbReference>
<dbReference type="PDB" id="6W7M">
    <property type="method" value="EM"/>
    <property type="resolution" value="3.80 A"/>
    <property type="chains" value="F=1-135"/>
</dbReference>
<dbReference type="PDB" id="6W7W">
    <property type="method" value="EM"/>
    <property type="resolution" value="3.90 A"/>
    <property type="chains" value="E=1-135"/>
</dbReference>
<dbReference type="PDB" id="6WD0">
    <property type="method" value="EM"/>
    <property type="resolution" value="3.00 A"/>
    <property type="chains" value="K=1-100"/>
</dbReference>
<dbReference type="PDB" id="6WD1">
    <property type="method" value="EM"/>
    <property type="resolution" value="3.30 A"/>
    <property type="chains" value="K=1-100"/>
</dbReference>
<dbReference type="PDB" id="6WD2">
    <property type="method" value="EM"/>
    <property type="resolution" value="3.60 A"/>
    <property type="chains" value="K=1-100"/>
</dbReference>
<dbReference type="PDB" id="6WD3">
    <property type="method" value="EM"/>
    <property type="resolution" value="3.60 A"/>
    <property type="chains" value="K=1-100"/>
</dbReference>
<dbReference type="PDB" id="6WD4">
    <property type="method" value="EM"/>
    <property type="resolution" value="3.70 A"/>
    <property type="chains" value="K=1-100"/>
</dbReference>
<dbReference type="PDB" id="6WD5">
    <property type="method" value="EM"/>
    <property type="resolution" value="3.60 A"/>
    <property type="chains" value="K=1-100"/>
</dbReference>
<dbReference type="PDB" id="6WD6">
    <property type="method" value="EM"/>
    <property type="resolution" value="3.70 A"/>
    <property type="chains" value="K=1-100"/>
</dbReference>
<dbReference type="PDB" id="6WD7">
    <property type="method" value="EM"/>
    <property type="resolution" value="3.90 A"/>
    <property type="chains" value="K=1-100"/>
</dbReference>
<dbReference type="PDB" id="6WD8">
    <property type="method" value="EM"/>
    <property type="resolution" value="3.70 A"/>
    <property type="chains" value="K=1-100"/>
</dbReference>
<dbReference type="PDB" id="6WD9">
    <property type="method" value="EM"/>
    <property type="resolution" value="3.70 A"/>
    <property type="chains" value="K=1-100"/>
</dbReference>
<dbReference type="PDB" id="6WDA">
    <property type="method" value="EM"/>
    <property type="resolution" value="3.80 A"/>
    <property type="chains" value="K=1-100"/>
</dbReference>
<dbReference type="PDB" id="6WDB">
    <property type="method" value="EM"/>
    <property type="resolution" value="4.00 A"/>
    <property type="chains" value="K=1-100"/>
</dbReference>
<dbReference type="PDB" id="6WDC">
    <property type="method" value="EM"/>
    <property type="resolution" value="4.20 A"/>
    <property type="chains" value="K=1-100"/>
</dbReference>
<dbReference type="PDB" id="6WDD">
    <property type="method" value="EM"/>
    <property type="resolution" value="3.20 A"/>
    <property type="chains" value="K=1-100"/>
</dbReference>
<dbReference type="PDB" id="6WDE">
    <property type="method" value="EM"/>
    <property type="resolution" value="3.00 A"/>
    <property type="chains" value="K=1-100"/>
</dbReference>
<dbReference type="PDB" id="6WDF">
    <property type="method" value="EM"/>
    <property type="resolution" value="3.30 A"/>
    <property type="chains" value="K=1-100"/>
</dbReference>
<dbReference type="PDB" id="6WDG">
    <property type="method" value="EM"/>
    <property type="resolution" value="3.30 A"/>
    <property type="chains" value="K=1-100"/>
</dbReference>
<dbReference type="PDB" id="6WDH">
    <property type="method" value="EM"/>
    <property type="resolution" value="4.30 A"/>
    <property type="chains" value="K=1-100"/>
</dbReference>
<dbReference type="PDB" id="6WDI">
    <property type="method" value="EM"/>
    <property type="resolution" value="4.00 A"/>
    <property type="chains" value="K=1-100"/>
</dbReference>
<dbReference type="PDB" id="6WDJ">
    <property type="method" value="EM"/>
    <property type="resolution" value="3.70 A"/>
    <property type="chains" value="K=1-100"/>
</dbReference>
<dbReference type="PDB" id="6WDK">
    <property type="method" value="EM"/>
    <property type="resolution" value="3.60 A"/>
    <property type="chains" value="K=1-100"/>
</dbReference>
<dbReference type="PDB" id="6WDL">
    <property type="method" value="EM"/>
    <property type="resolution" value="3.70 A"/>
    <property type="chains" value="K=1-100"/>
</dbReference>
<dbReference type="PDB" id="6WDM">
    <property type="method" value="EM"/>
    <property type="resolution" value="3.60 A"/>
    <property type="chains" value="K=1-100"/>
</dbReference>
<dbReference type="PDB" id="6WNV">
    <property type="method" value="EM"/>
    <property type="resolution" value="3.50 A"/>
    <property type="chains" value="K=1-100"/>
</dbReference>
<dbReference type="PDB" id="6WNW">
    <property type="method" value="EM"/>
    <property type="resolution" value="3.20 A"/>
    <property type="chains" value="K=1-100"/>
</dbReference>
<dbReference type="PDB" id="6X6T">
    <property type="method" value="EM"/>
    <property type="resolution" value="3.20 A"/>
    <property type="chains" value="L=1-135"/>
</dbReference>
<dbReference type="PDB" id="6X7F">
    <property type="method" value="EM"/>
    <property type="resolution" value="3.50 A"/>
    <property type="chains" value="L=1-135"/>
</dbReference>
<dbReference type="PDB" id="6X7K">
    <property type="method" value="EM"/>
    <property type="resolution" value="3.10 A"/>
    <property type="chains" value="L=1-135"/>
</dbReference>
<dbReference type="PDB" id="6X9Q">
    <property type="method" value="EM"/>
    <property type="resolution" value="4.80 A"/>
    <property type="chains" value="L=1-135"/>
</dbReference>
<dbReference type="PDB" id="6XDQ">
    <property type="method" value="EM"/>
    <property type="resolution" value="3.70 A"/>
    <property type="chains" value="L=1-135"/>
</dbReference>
<dbReference type="PDB" id="6XDR">
    <property type="method" value="EM"/>
    <property type="resolution" value="4.70 A"/>
    <property type="chains" value="L=1-135"/>
</dbReference>
<dbReference type="PDB" id="6XE0">
    <property type="method" value="EM"/>
    <property type="resolution" value="6.80 A"/>
    <property type="chains" value="E=1-100"/>
</dbReference>
<dbReference type="PDB" id="6XGF">
    <property type="method" value="EM"/>
    <property type="resolution" value="5.00 A"/>
    <property type="chains" value="L=1-135"/>
</dbReference>
<dbReference type="PDB" id="6XII">
    <property type="method" value="EM"/>
    <property type="resolution" value="7.00 A"/>
    <property type="chains" value="L=1-135"/>
</dbReference>
<dbReference type="PDB" id="6XIJ">
    <property type="method" value="EM"/>
    <property type="resolution" value="8.00 A"/>
    <property type="chains" value="L=1-135"/>
</dbReference>
<dbReference type="PDB" id="6XZA">
    <property type="method" value="EM"/>
    <property type="resolution" value="2.66 A"/>
    <property type="chains" value="F1=1-106"/>
</dbReference>
<dbReference type="PDB" id="6XZB">
    <property type="method" value="EM"/>
    <property type="resolution" value="2.54 A"/>
    <property type="chains" value="F1=1-106"/>
</dbReference>
<dbReference type="PDB" id="6Y69">
    <property type="method" value="EM"/>
    <property type="resolution" value="2.86 A"/>
    <property type="chains" value="f=1-100"/>
</dbReference>
<dbReference type="PDB" id="6ZTJ">
    <property type="method" value="EM"/>
    <property type="resolution" value="3.40 A"/>
    <property type="chains" value="AF=1-131"/>
</dbReference>
<dbReference type="PDB" id="6ZTL">
    <property type="method" value="EM"/>
    <property type="resolution" value="3.50 A"/>
    <property type="chains" value="AF=1-131"/>
</dbReference>
<dbReference type="PDB" id="6ZTM">
    <property type="method" value="EM"/>
    <property type="resolution" value="3.30 A"/>
    <property type="chains" value="AF=1-131"/>
</dbReference>
<dbReference type="PDB" id="6ZTN">
    <property type="method" value="EM"/>
    <property type="resolution" value="3.90 A"/>
    <property type="chains" value="AF=1-131"/>
</dbReference>
<dbReference type="PDB" id="6ZTO">
    <property type="method" value="EM"/>
    <property type="resolution" value="3.00 A"/>
    <property type="chains" value="AF=1-131"/>
</dbReference>
<dbReference type="PDB" id="6ZTP">
    <property type="method" value="EM"/>
    <property type="resolution" value="3.00 A"/>
    <property type="chains" value="AF=1-131"/>
</dbReference>
<dbReference type="PDB" id="6ZU1">
    <property type="method" value="EM"/>
    <property type="resolution" value="3.00 A"/>
    <property type="chains" value="AF=1-131"/>
</dbReference>
<dbReference type="PDB" id="7ABZ">
    <property type="method" value="EM"/>
    <property type="resolution" value="3.21 A"/>
    <property type="chains" value="k=1-100"/>
</dbReference>
<dbReference type="PDB" id="7AC7">
    <property type="method" value="EM"/>
    <property type="resolution" value="3.08 A"/>
    <property type="chains" value="k=1-104"/>
</dbReference>
<dbReference type="PDB" id="7ACJ">
    <property type="method" value="EM"/>
    <property type="resolution" value="3.20 A"/>
    <property type="chains" value="k=1-104"/>
</dbReference>
<dbReference type="PDB" id="7ACR">
    <property type="method" value="EM"/>
    <property type="resolution" value="3.44 A"/>
    <property type="chains" value="k=1-104"/>
</dbReference>
<dbReference type="PDB" id="7AFI">
    <property type="method" value="EM"/>
    <property type="resolution" value="3.53 A"/>
    <property type="chains" value="F=1-135"/>
</dbReference>
<dbReference type="PDB" id="7AFL">
    <property type="method" value="EM"/>
    <property type="resolution" value="4.20 A"/>
    <property type="chains" value="F=1-135"/>
</dbReference>
<dbReference type="PDB" id="7AFO">
    <property type="method" value="EM"/>
    <property type="resolution" value="3.93 A"/>
    <property type="chains" value="F=1-135"/>
</dbReference>
<dbReference type="PDB" id="7B5K">
    <property type="method" value="EM"/>
    <property type="resolution" value="2.90 A"/>
    <property type="chains" value="f=1-106"/>
</dbReference>
<dbReference type="PDB" id="7BOD">
    <property type="method" value="EM"/>
    <property type="resolution" value="2.88 A"/>
    <property type="chains" value="F=1-135"/>
</dbReference>
<dbReference type="PDB" id="7BOE">
    <property type="method" value="EM"/>
    <property type="resolution" value="2.90 A"/>
    <property type="chains" value="F=1-135"/>
</dbReference>
<dbReference type="PDB" id="7BOF">
    <property type="method" value="EM"/>
    <property type="resolution" value="2.92 A"/>
    <property type="chains" value="F=1-135"/>
</dbReference>
<dbReference type="PDB" id="7BOG">
    <property type="method" value="EM"/>
    <property type="resolution" value="2.75 A"/>
    <property type="chains" value="F=1-135"/>
</dbReference>
<dbReference type="PDB" id="7BOH">
    <property type="method" value="EM"/>
    <property type="resolution" value="2.82 A"/>
    <property type="chains" value="F=1-135"/>
</dbReference>
<dbReference type="PDB" id="7BOI">
    <property type="method" value="EM"/>
    <property type="resolution" value="2.98 A"/>
    <property type="chains" value="F=1-135"/>
</dbReference>
<dbReference type="PDB" id="7CPJ">
    <property type="method" value="EM"/>
    <property type="resolution" value="3.30 A"/>
    <property type="chains" value="f=1-135"/>
</dbReference>
<dbReference type="PDB" id="7D6Z">
    <property type="method" value="EM"/>
    <property type="resolution" value="3.40 A"/>
    <property type="chains" value="m=1-135"/>
</dbReference>
<dbReference type="PDB" id="7D80">
    <property type="method" value="EM"/>
    <property type="resolution" value="4.10 A"/>
    <property type="chains" value="G=1-135"/>
</dbReference>
<dbReference type="PDB" id="7JSS">
    <property type="method" value="EM"/>
    <property type="resolution" value="3.70 A"/>
    <property type="chains" value="K=1-100"/>
</dbReference>
<dbReference type="PDB" id="7JSW">
    <property type="method" value="EM"/>
    <property type="resolution" value="3.80 A"/>
    <property type="chains" value="K=1-100"/>
</dbReference>
<dbReference type="PDB" id="7JSZ">
    <property type="method" value="EM"/>
    <property type="resolution" value="3.70 A"/>
    <property type="chains" value="K=1-100"/>
</dbReference>
<dbReference type="PDB" id="7JT1">
    <property type="method" value="EM"/>
    <property type="resolution" value="3.30 A"/>
    <property type="chains" value="K=1-100"/>
</dbReference>
<dbReference type="PDB" id="7JT2">
    <property type="method" value="EM"/>
    <property type="resolution" value="3.50 A"/>
    <property type="chains" value="K=1-100"/>
</dbReference>
<dbReference type="PDB" id="7JT3">
    <property type="method" value="EM"/>
    <property type="resolution" value="3.70 A"/>
    <property type="chains" value="K=1-100"/>
</dbReference>
<dbReference type="PDB" id="7K00">
    <property type="method" value="EM"/>
    <property type="resolution" value="1.98 A"/>
    <property type="chains" value="F=1-135"/>
</dbReference>
<dbReference type="PDB" id="7K50">
    <property type="method" value="EM"/>
    <property type="resolution" value="3.40 A"/>
    <property type="chains" value="K=1-100"/>
</dbReference>
<dbReference type="PDB" id="7K51">
    <property type="method" value="EM"/>
    <property type="resolution" value="3.50 A"/>
    <property type="chains" value="K=1-100"/>
</dbReference>
<dbReference type="PDB" id="7K52">
    <property type="method" value="EM"/>
    <property type="resolution" value="3.40 A"/>
    <property type="chains" value="K=1-100"/>
</dbReference>
<dbReference type="PDB" id="7K53">
    <property type="method" value="EM"/>
    <property type="resolution" value="3.20 A"/>
    <property type="chains" value="K=1-100"/>
</dbReference>
<dbReference type="PDB" id="7K54">
    <property type="method" value="EM"/>
    <property type="resolution" value="3.20 A"/>
    <property type="chains" value="K=1-100"/>
</dbReference>
<dbReference type="PDB" id="7K55">
    <property type="method" value="EM"/>
    <property type="resolution" value="3.30 A"/>
    <property type="chains" value="K=1-100"/>
</dbReference>
<dbReference type="PDB" id="7LV0">
    <property type="method" value="EM"/>
    <property type="resolution" value="3.20 A"/>
    <property type="chains" value="K=1-100"/>
</dbReference>
<dbReference type="PDB" id="7M5D">
    <property type="method" value="EM"/>
    <property type="resolution" value="2.80 A"/>
    <property type="chains" value="k=1-104"/>
</dbReference>
<dbReference type="PDB" id="7N1P">
    <property type="method" value="EM"/>
    <property type="resolution" value="2.33 A"/>
    <property type="chains" value="SF=1-135"/>
</dbReference>
<dbReference type="PDB" id="7N2C">
    <property type="method" value="EM"/>
    <property type="resolution" value="2.72 A"/>
    <property type="chains" value="SF=1-135"/>
</dbReference>
<dbReference type="PDB" id="7N2U">
    <property type="method" value="EM"/>
    <property type="resolution" value="2.53 A"/>
    <property type="chains" value="SF=1-135"/>
</dbReference>
<dbReference type="PDB" id="7N2V">
    <property type="method" value="EM"/>
    <property type="resolution" value="2.54 A"/>
    <property type="chains" value="SF=1-135"/>
</dbReference>
<dbReference type="PDB" id="7N30">
    <property type="method" value="EM"/>
    <property type="resolution" value="2.66 A"/>
    <property type="chains" value="SF=1-135"/>
</dbReference>
<dbReference type="PDB" id="7N31">
    <property type="method" value="EM"/>
    <property type="resolution" value="2.69 A"/>
    <property type="chains" value="SF=1-135"/>
</dbReference>
<dbReference type="PDB" id="7NAR">
    <property type="method" value="EM"/>
    <property type="resolution" value="3.00 A"/>
    <property type="chains" value="F=1-135"/>
</dbReference>
<dbReference type="PDB" id="7NAS">
    <property type="method" value="EM"/>
    <property type="resolution" value="3.31 A"/>
    <property type="chains" value="F=1-135"/>
</dbReference>
<dbReference type="PDB" id="7NAT">
    <property type="method" value="EM"/>
    <property type="resolution" value="3.59 A"/>
    <property type="chains" value="F=1-135"/>
</dbReference>
<dbReference type="PDB" id="7NAU">
    <property type="method" value="EM"/>
    <property type="resolution" value="3.78 A"/>
    <property type="chains" value="F=1-135"/>
</dbReference>
<dbReference type="PDB" id="7NAV">
    <property type="method" value="EM"/>
    <property type="resolution" value="4.80 A"/>
    <property type="chains" value="F=1-135"/>
</dbReference>
<dbReference type="PDB" id="7NAX">
    <property type="method" value="EM"/>
    <property type="resolution" value="2.96 A"/>
    <property type="chains" value="F=1-135"/>
</dbReference>
<dbReference type="PDB" id="7NBU">
    <property type="method" value="EM"/>
    <property type="resolution" value="3.11 A"/>
    <property type="chains" value="F=1-103"/>
</dbReference>
<dbReference type="PDB" id="7NWT">
    <property type="method" value="EM"/>
    <property type="resolution" value="2.66 A"/>
    <property type="chains" value="k=1-135"/>
</dbReference>
<dbReference type="PDB" id="7O19">
    <property type="method" value="EM"/>
    <property type="resolution" value="2.90 A"/>
    <property type="chains" value="AF=1-135"/>
</dbReference>
<dbReference type="PDB" id="7O1A">
    <property type="method" value="EM"/>
    <property type="resolution" value="2.40 A"/>
    <property type="chains" value="AF=1-135"/>
</dbReference>
<dbReference type="PDB" id="7O1C">
    <property type="method" value="EM"/>
    <property type="resolution" value="2.60 A"/>
    <property type="chains" value="AF=1-135"/>
</dbReference>
<dbReference type="PDB" id="7O5H">
    <property type="method" value="EM"/>
    <property type="resolution" value="3.10 A"/>
    <property type="chains" value="F=1-106"/>
</dbReference>
<dbReference type="PDB" id="7OE0">
    <property type="method" value="EM"/>
    <property type="resolution" value="2.69 A"/>
    <property type="chains" value="F=1-135"/>
</dbReference>
<dbReference type="PDB" id="7OE1">
    <property type="method" value="EM"/>
    <property type="resolution" value="3.05 A"/>
    <property type="chains" value="F=1-135"/>
</dbReference>
<dbReference type="PDB" id="7OI0">
    <property type="method" value="EM"/>
    <property type="resolution" value="2.76 A"/>
    <property type="chains" value="F=1-135"/>
</dbReference>
<dbReference type="PDB" id="7OIZ">
    <property type="method" value="EM"/>
    <property type="resolution" value="2.90 A"/>
    <property type="chains" value="F=1-135"/>
</dbReference>
<dbReference type="PDB" id="7OJ0">
    <property type="method" value="EM"/>
    <property type="resolution" value="3.50 A"/>
    <property type="chains" value="F=1-135"/>
</dbReference>
<dbReference type="PDB" id="7P3K">
    <property type="method" value="EM"/>
    <property type="resolution" value="2.90 A"/>
    <property type="chains" value="F=1-135"/>
</dbReference>
<dbReference type="PDB" id="7PJS">
    <property type="method" value="EM"/>
    <property type="resolution" value="2.35 A"/>
    <property type="chains" value="f=1-135"/>
</dbReference>
<dbReference type="PDB" id="7PJT">
    <property type="method" value="EM"/>
    <property type="resolution" value="6.00 A"/>
    <property type="chains" value="f=1-135"/>
</dbReference>
<dbReference type="PDB" id="7PJU">
    <property type="method" value="EM"/>
    <property type="resolution" value="9.50 A"/>
    <property type="chains" value="f=1-135"/>
</dbReference>
<dbReference type="PDB" id="7PJV">
    <property type="method" value="EM"/>
    <property type="resolution" value="3.10 A"/>
    <property type="chains" value="f=1-135"/>
</dbReference>
<dbReference type="PDB" id="7PJW">
    <property type="method" value="EM"/>
    <property type="resolution" value="4.00 A"/>
    <property type="chains" value="f=1-135"/>
</dbReference>
<dbReference type="PDB" id="7PJX">
    <property type="method" value="EM"/>
    <property type="resolution" value="6.50 A"/>
    <property type="chains" value="f=1-135"/>
</dbReference>
<dbReference type="PDB" id="7PJY">
    <property type="method" value="EM"/>
    <property type="resolution" value="3.10 A"/>
    <property type="chains" value="f=1-135"/>
</dbReference>
<dbReference type="PDB" id="7PJZ">
    <property type="method" value="EM"/>
    <property type="resolution" value="6.00 A"/>
    <property type="chains" value="f=1-135"/>
</dbReference>
<dbReference type="PDB" id="7Q4K">
    <property type="method" value="EM"/>
    <property type="resolution" value="3.00 A"/>
    <property type="chains" value="AF=1-135"/>
</dbReference>
<dbReference type="PDB" id="7QG8">
    <property type="method" value="EM"/>
    <property type="resolution" value="3.97 A"/>
    <property type="chains" value="5=1-131"/>
</dbReference>
<dbReference type="PDB" id="7QGH">
    <property type="method" value="EM"/>
    <property type="resolution" value="4.48 A"/>
    <property type="chains" value="5=1-131"/>
</dbReference>
<dbReference type="PDB" id="7QGN">
    <property type="method" value="EM"/>
    <property type="resolution" value="3.37 A"/>
    <property type="chains" value="5=1-131"/>
</dbReference>
<dbReference type="PDB" id="7QGR">
    <property type="method" value="EM"/>
    <property type="resolution" value="5.70 A"/>
    <property type="chains" value="5=1-131"/>
</dbReference>
<dbReference type="PDB" id="7S1G">
    <property type="method" value="EM"/>
    <property type="resolution" value="2.48 A"/>
    <property type="chains" value="H=1-135"/>
</dbReference>
<dbReference type="PDB" id="7S1H">
    <property type="method" value="EM"/>
    <property type="resolution" value="2.35 A"/>
    <property type="chains" value="H=1-135"/>
</dbReference>
<dbReference type="PDB" id="7S1I">
    <property type="method" value="EM"/>
    <property type="resolution" value="2.48 A"/>
    <property type="chains" value="H=1-135"/>
</dbReference>
<dbReference type="PDB" id="7S1J">
    <property type="method" value="EM"/>
    <property type="resolution" value="2.47 A"/>
    <property type="chains" value="H=1-135"/>
</dbReference>
<dbReference type="PDB" id="7S1K">
    <property type="method" value="EM"/>
    <property type="resolution" value="2.42 A"/>
    <property type="chains" value="H=1-135"/>
</dbReference>
<dbReference type="PDB" id="7SA4">
    <property type="method" value="EM"/>
    <property type="resolution" value="2.55 A"/>
    <property type="chains" value="k=1-135"/>
</dbReference>
<dbReference type="PDB" id="7SS9">
    <property type="method" value="EM"/>
    <property type="resolution" value="3.90 A"/>
    <property type="chains" value="K=1-100"/>
</dbReference>
<dbReference type="PDB" id="7SSD">
    <property type="method" value="EM"/>
    <property type="resolution" value="3.30 A"/>
    <property type="chains" value="K=1-100"/>
</dbReference>
<dbReference type="PDB" id="7SSL">
    <property type="method" value="EM"/>
    <property type="resolution" value="3.80 A"/>
    <property type="chains" value="K=1-100"/>
</dbReference>
<dbReference type="PDB" id="7SSN">
    <property type="method" value="EM"/>
    <property type="resolution" value="3.20 A"/>
    <property type="chains" value="K=1-100"/>
</dbReference>
<dbReference type="PDB" id="7SSO">
    <property type="method" value="EM"/>
    <property type="resolution" value="3.20 A"/>
    <property type="chains" value="K=1-100"/>
</dbReference>
<dbReference type="PDB" id="7SSW">
    <property type="method" value="EM"/>
    <property type="resolution" value="3.80 A"/>
    <property type="chains" value="K=1-100"/>
</dbReference>
<dbReference type="PDB" id="7ST2">
    <property type="method" value="EM"/>
    <property type="resolution" value="2.90 A"/>
    <property type="chains" value="K=1-100"/>
</dbReference>
<dbReference type="PDB" id="7ST6">
    <property type="method" value="EM"/>
    <property type="resolution" value="3.00 A"/>
    <property type="chains" value="K=1-100"/>
</dbReference>
<dbReference type="PDB" id="7ST7">
    <property type="method" value="EM"/>
    <property type="resolution" value="3.20 A"/>
    <property type="chains" value="K=1-100"/>
</dbReference>
<dbReference type="PDB" id="7TOS">
    <property type="method" value="EM"/>
    <property type="resolution" value="2.90 A"/>
    <property type="chains" value="S06=1-100"/>
</dbReference>
<dbReference type="PDB" id="7UG7">
    <property type="method" value="EM"/>
    <property type="resolution" value="2.58 A"/>
    <property type="chains" value="SF=1-135"/>
</dbReference>
<dbReference type="PDB" id="7UPH">
    <property type="method" value="EM"/>
    <property type="resolution" value="4.18 A"/>
    <property type="chains" value="a=1-100"/>
</dbReference>
<dbReference type="PDB" id="7Y7C">
    <property type="method" value="EM"/>
    <property type="resolution" value="2.51 A"/>
    <property type="chains" value="F=1-135"/>
</dbReference>
<dbReference type="PDB" id="7Y7D">
    <property type="method" value="EM"/>
    <property type="resolution" value="2.58 A"/>
    <property type="chains" value="F=1-135"/>
</dbReference>
<dbReference type="PDB" id="7Y7E">
    <property type="method" value="EM"/>
    <property type="resolution" value="2.41 A"/>
    <property type="chains" value="F=1-135"/>
</dbReference>
<dbReference type="PDB" id="7Y7F">
    <property type="method" value="EM"/>
    <property type="resolution" value="2.43 A"/>
    <property type="chains" value="F=1-135"/>
</dbReference>
<dbReference type="PDB" id="7Y7G">
    <property type="method" value="EM"/>
    <property type="resolution" value="2.34 A"/>
    <property type="chains" value="F=1-135"/>
</dbReference>
<dbReference type="PDB" id="7Y7H">
    <property type="method" value="EM"/>
    <property type="resolution" value="2.51 A"/>
    <property type="chains" value="F=1-135"/>
</dbReference>
<dbReference type="PDB" id="7ZTA">
    <property type="method" value="EM"/>
    <property type="resolution" value="2.70 A"/>
    <property type="chains" value="S061=1-106"/>
</dbReference>
<dbReference type="PDB" id="8A3L">
    <property type="method" value="EM"/>
    <property type="resolution" value="3.42 A"/>
    <property type="chains" value="F=1-135"/>
</dbReference>
<dbReference type="PDB" id="8AKN">
    <property type="method" value="EM"/>
    <property type="resolution" value="2.30 A"/>
    <property type="chains" value="G=1-135"/>
</dbReference>
<dbReference type="PDB" id="8AM9">
    <property type="method" value="EM"/>
    <property type="resolution" value="2.80 A"/>
    <property type="chains" value="G=1-135"/>
</dbReference>
<dbReference type="PDB" id="8AYE">
    <property type="method" value="EM"/>
    <property type="resolution" value="1.96 A"/>
    <property type="chains" value="F=1-135"/>
</dbReference>
<dbReference type="PDB" id="8B0X">
    <property type="method" value="EM"/>
    <property type="resolution" value="1.55 A"/>
    <property type="chains" value="F=1-135"/>
</dbReference>
<dbReference type="PDB" id="8B7Y">
    <property type="method" value="EM"/>
    <property type="resolution" value="3.00 A"/>
    <property type="chains" value="H=1-135"/>
</dbReference>
<dbReference type="PDB" id="8BF7">
    <property type="method" value="EM"/>
    <property type="resolution" value="2.33 A"/>
    <property type="chains" value="j=1-131"/>
</dbReference>
<dbReference type="PDB" id="8BGE">
    <property type="method" value="EM"/>
    <property type="resolution" value="2.11 A"/>
    <property type="chains" value="j=1-131"/>
</dbReference>
<dbReference type="PDB" id="8BGH">
    <property type="method" value="EM"/>
    <property type="resolution" value="2.88 A"/>
    <property type="chains" value="j=1-131"/>
</dbReference>
<dbReference type="PDB" id="8BH4">
    <property type="method" value="EM"/>
    <property type="resolution" value="2.62 A"/>
    <property type="chains" value="j=1-131"/>
</dbReference>
<dbReference type="PDB" id="8BHJ">
    <property type="method" value="EM"/>
    <property type="resolution" value="2.81 A"/>
    <property type="chains" value="j=1-131"/>
</dbReference>
<dbReference type="PDB" id="8BHL">
    <property type="method" value="EM"/>
    <property type="resolution" value="2.21 A"/>
    <property type="chains" value="j=1-131"/>
</dbReference>
<dbReference type="PDB" id="8BHN">
    <property type="method" value="EM"/>
    <property type="resolution" value="2.85 A"/>
    <property type="chains" value="j=1-131"/>
</dbReference>
<dbReference type="PDB" id="8BHP">
    <property type="method" value="EM"/>
    <property type="resolution" value="2.37 A"/>
    <property type="chains" value="j=1-131"/>
</dbReference>
<dbReference type="PDB" id="8BIL">
    <property type="method" value="EM"/>
    <property type="resolution" value="2.04 A"/>
    <property type="chains" value="j=1-131"/>
</dbReference>
<dbReference type="PDB" id="8BIM">
    <property type="method" value="EM"/>
    <property type="resolution" value="2.04 A"/>
    <property type="chains" value="j=1-131"/>
</dbReference>
<dbReference type="PDB" id="8CAI">
    <property type="method" value="EM"/>
    <property type="resolution" value="2.08 A"/>
    <property type="chains" value="F=1-131"/>
</dbReference>
<dbReference type="PDB" id="8CEP">
    <property type="method" value="EM"/>
    <property type="resolution" value="2.04 A"/>
    <property type="chains" value="F=1-131"/>
</dbReference>
<dbReference type="PDB" id="8CGJ">
    <property type="method" value="EM"/>
    <property type="resolution" value="1.79 A"/>
    <property type="chains" value="F=1-131"/>
</dbReference>
<dbReference type="PDB" id="8CGR">
    <property type="method" value="EM"/>
    <property type="resolution" value="2.12 A"/>
    <property type="chains" value="F=1-131"/>
</dbReference>
<dbReference type="PDB" id="8CGU">
    <property type="method" value="EM"/>
    <property type="resolution" value="1.89 A"/>
    <property type="chains" value="F=1-131"/>
</dbReference>
<dbReference type="PDB" id="8EIU">
    <property type="method" value="EM"/>
    <property type="resolution" value="2.24 A"/>
    <property type="chains" value="F=1-135"/>
</dbReference>
<dbReference type="PDB" id="8EKC">
    <property type="method" value="EM"/>
    <property type="resolution" value="2.70 A"/>
    <property type="chains" value="f=1-131"/>
</dbReference>
<dbReference type="PDB" id="8EMM">
    <property type="method" value="EM"/>
    <property type="resolution" value="2.10 A"/>
    <property type="chains" value="F=1-135"/>
</dbReference>
<dbReference type="PDB" id="8EYQ">
    <property type="method" value="EM"/>
    <property type="resolution" value="3.30 A"/>
    <property type="chains" value="F=1-135"/>
</dbReference>
<dbReference type="PDB" id="8EYT">
    <property type="method" value="EM"/>
    <property type="resolution" value="2.80 A"/>
    <property type="chains" value="O=1-135"/>
</dbReference>
<dbReference type="PDB" id="8FIZ">
    <property type="method" value="EM"/>
    <property type="resolution" value="3.80 A"/>
    <property type="chains" value="AN=1-135"/>
</dbReference>
<dbReference type="PDB" id="8FTO">
    <property type="method" value="EM"/>
    <property type="resolution" value="1.85 A"/>
    <property type="chains" value="F=1-135"/>
</dbReference>
<dbReference type="PDB" id="8FZD">
    <property type="method" value="EM"/>
    <property type="resolution" value="3.10 A"/>
    <property type="chains" value="f=1-131"/>
</dbReference>
<dbReference type="PDB" id="8FZE">
    <property type="method" value="EM"/>
    <property type="resolution" value="3.00 A"/>
    <property type="chains" value="f=1-131"/>
</dbReference>
<dbReference type="PDB" id="8FZF">
    <property type="method" value="EM"/>
    <property type="resolution" value="3.20 A"/>
    <property type="chains" value="f=1-131"/>
</dbReference>
<dbReference type="PDB" id="8FZG">
    <property type="method" value="EM"/>
    <property type="resolution" value="3.10 A"/>
    <property type="chains" value="f=1-131"/>
</dbReference>
<dbReference type="PDB" id="8FZH">
    <property type="method" value="EM"/>
    <property type="resolution" value="2.90 A"/>
    <property type="chains" value="f=1-131"/>
</dbReference>
<dbReference type="PDB" id="8FZI">
    <property type="method" value="EM"/>
    <property type="resolution" value="3.10 A"/>
    <property type="chains" value="f=1-131"/>
</dbReference>
<dbReference type="PDB" id="8FZJ">
    <property type="method" value="EM"/>
    <property type="resolution" value="3.00 A"/>
    <property type="chains" value="f=1-131"/>
</dbReference>
<dbReference type="PDB" id="8G2U">
    <property type="method" value="EM"/>
    <property type="resolution" value="3.00 A"/>
    <property type="chains" value="e=1-100"/>
</dbReference>
<dbReference type="PDB" id="8G31">
    <property type="method" value="EM"/>
    <property type="resolution" value="3.20 A"/>
    <property type="chains" value="e=1-100"/>
</dbReference>
<dbReference type="PDB" id="8G34">
    <property type="method" value="EM"/>
    <property type="resolution" value="3.20 A"/>
    <property type="chains" value="e=1-100"/>
</dbReference>
<dbReference type="PDB" id="8G38">
    <property type="method" value="EM"/>
    <property type="resolution" value="3.20 A"/>
    <property type="chains" value="e=1-100"/>
</dbReference>
<dbReference type="PDB" id="8G6W">
    <property type="method" value="EM"/>
    <property type="resolution" value="2.02 A"/>
    <property type="chains" value="F=1-135"/>
</dbReference>
<dbReference type="PDB" id="8G7P">
    <property type="method" value="EM"/>
    <property type="resolution" value="2.90 A"/>
    <property type="chains" value="f=1-131"/>
</dbReference>
<dbReference type="PDB" id="8G7Q">
    <property type="method" value="EM"/>
    <property type="resolution" value="3.10 A"/>
    <property type="chains" value="f=1-131"/>
</dbReference>
<dbReference type="PDB" id="8G7R">
    <property type="method" value="EM"/>
    <property type="resolution" value="2.80 A"/>
    <property type="chains" value="f=1-131"/>
</dbReference>
<dbReference type="PDB" id="8G7S">
    <property type="method" value="EM"/>
    <property type="resolution" value="3.10 A"/>
    <property type="chains" value="f=1-131"/>
</dbReference>
<dbReference type="PDB" id="8GHU">
    <property type="method" value="EM"/>
    <property type="resolution" value="3.00 A"/>
    <property type="chains" value="f=1-100"/>
</dbReference>
<dbReference type="PDB" id="8HSP">
    <property type="method" value="EM"/>
    <property type="resolution" value="2.32 A"/>
    <property type="chains" value="F=1-135"/>
</dbReference>
<dbReference type="PDB" id="8HTZ">
    <property type="method" value="EM"/>
    <property type="resolution" value="2.40 A"/>
    <property type="chains" value="F=1-135"/>
</dbReference>
<dbReference type="PDB" id="8HU1">
    <property type="method" value="EM"/>
    <property type="resolution" value="2.69 A"/>
    <property type="chains" value="F=1-135"/>
</dbReference>
<dbReference type="PDB" id="8IFB">
    <property type="method" value="EM"/>
    <property type="resolution" value="2.43 A"/>
    <property type="chains" value="F=1-135"/>
</dbReference>
<dbReference type="PDB" id="8IFC">
    <property type="method" value="EM"/>
    <property type="resolution" value="2.90 A"/>
    <property type="chains" value="F=1-135"/>
</dbReference>
<dbReference type="PDB" id="8JSG">
    <property type="method" value="EM"/>
    <property type="resolution" value="4.60 A"/>
    <property type="chains" value="n=1-100"/>
</dbReference>
<dbReference type="PDB" id="8JSH">
    <property type="method" value="EM"/>
    <property type="resolution" value="4.40 A"/>
    <property type="chains" value="n=1-135"/>
</dbReference>
<dbReference type="PDB" id="8K3O">
    <property type="method" value="EM"/>
    <property type="resolution" value="3.88 A"/>
    <property type="chains" value="F=1-135"/>
</dbReference>
<dbReference type="PDB" id="8K4E">
    <property type="method" value="EM"/>
    <property type="resolution" value="3.40 A"/>
    <property type="chains" value="F=1-135"/>
</dbReference>
<dbReference type="PDB" id="8P16">
    <property type="method" value="EM"/>
    <property type="resolution" value="2.77 A"/>
    <property type="chains" value="k=1-135"/>
</dbReference>
<dbReference type="PDB" id="8P17">
    <property type="method" value="EM"/>
    <property type="resolution" value="2.78 A"/>
    <property type="chains" value="k=1-135"/>
</dbReference>
<dbReference type="PDB" id="8P18">
    <property type="method" value="EM"/>
    <property type="resolution" value="2.77 A"/>
    <property type="chains" value="k=1-135"/>
</dbReference>
<dbReference type="PDB" id="8PEG">
    <property type="method" value="EM"/>
    <property type="resolution" value="3.30 A"/>
    <property type="chains" value="F=1-135"/>
</dbReference>
<dbReference type="PDB" id="8PHJ">
    <property type="method" value="EM"/>
    <property type="resolution" value="3.67 A"/>
    <property type="chains" value="F=1-135"/>
</dbReference>
<dbReference type="PDB" id="8PKL">
    <property type="method" value="EM"/>
    <property type="resolution" value="3.09 A"/>
    <property type="chains" value="F=1-135"/>
</dbReference>
<dbReference type="PDB" id="8PVA">
    <property type="method" value="EM"/>
    <property type="resolution" value="4.50 A"/>
    <property type="chains" value="F=1-135"/>
</dbReference>
<dbReference type="PDB" id="8Q4F">
    <property type="method" value="EM"/>
    <property type="resolution" value="3.10 A"/>
    <property type="chains" value="F=1-135"/>
</dbReference>
<dbReference type="PDB" id="8QBT">
    <property type="method" value="EM"/>
    <property type="resolution" value="2.20 A"/>
    <property type="chains" value="n=1-135"/>
</dbReference>
<dbReference type="PDB" id="8QK7">
    <property type="method" value="EM"/>
    <property type="resolution" value="2.77 A"/>
    <property type="chains" value="k=1-135"/>
</dbReference>
<dbReference type="PDB" id="8QOA">
    <property type="method" value="EM"/>
    <property type="resolution" value="2.00 A"/>
    <property type="chains" value="F=1-135"/>
</dbReference>
<dbReference type="PDB" id="8R3V">
    <property type="method" value="EM"/>
    <property type="resolution" value="3.28 A"/>
    <property type="chains" value="F1/F2=1-135"/>
</dbReference>
<dbReference type="PDB" id="8R6C">
    <property type="method" value="EM"/>
    <property type="resolution" value="2.20 A"/>
    <property type="chains" value="F=1-135"/>
</dbReference>
<dbReference type="PDB" id="8R8M">
    <property type="method" value="EM"/>
    <property type="resolution" value="2.40 A"/>
    <property type="chains" value="F=1-135"/>
</dbReference>
<dbReference type="PDB" id="8RCL">
    <property type="method" value="EM"/>
    <property type="resolution" value="3.49 A"/>
    <property type="chains" value="F1/F2=1-135"/>
</dbReference>
<dbReference type="PDB" id="8RCM">
    <property type="method" value="EM"/>
    <property type="resolution" value="3.59 A"/>
    <property type="chains" value="F1/F2=1-135"/>
</dbReference>
<dbReference type="PDB" id="8RCS">
    <property type="method" value="EM"/>
    <property type="resolution" value="4.46 A"/>
    <property type="chains" value="F1/F2=1-135"/>
</dbReference>
<dbReference type="PDB" id="8RCT">
    <property type="method" value="EM"/>
    <property type="resolution" value="5.32 A"/>
    <property type="chains" value="F1/F2=1-135"/>
</dbReference>
<dbReference type="PDB" id="8SYL">
    <property type="method" value="EM"/>
    <property type="resolution" value="2.90 A"/>
    <property type="chains" value="f=1-131"/>
</dbReference>
<dbReference type="PDB" id="8T5D">
    <property type="method" value="EM"/>
    <property type="resolution" value="3.20 A"/>
    <property type="chains" value="e=1-100"/>
</dbReference>
<dbReference type="PDB" id="8T5H">
    <property type="method" value="EM"/>
    <property type="resolution" value="3.30 A"/>
    <property type="chains" value="e=1-100"/>
</dbReference>
<dbReference type="PDB" id="8UPO">
    <property type="method" value="EM"/>
    <property type="resolution" value="5.50 A"/>
    <property type="chains" value="L=1-135"/>
</dbReference>
<dbReference type="PDB" id="8UPR">
    <property type="method" value="EM"/>
    <property type="resolution" value="5.30 A"/>
    <property type="chains" value="L=1-135"/>
</dbReference>
<dbReference type="PDB" id="8UQL">
    <property type="method" value="EM"/>
    <property type="resolution" value="3.20 A"/>
    <property type="chains" value="L=1-135"/>
</dbReference>
<dbReference type="PDB" id="8UQM">
    <property type="method" value="EM"/>
    <property type="resolution" value="5.30 A"/>
    <property type="chains" value="L=1-135"/>
</dbReference>
<dbReference type="PDB" id="8UQP">
    <property type="method" value="EM"/>
    <property type="resolution" value="3.80 A"/>
    <property type="chains" value="L=1-135"/>
</dbReference>
<dbReference type="PDB" id="8UR0">
    <property type="method" value="EM"/>
    <property type="resolution" value="3.40 A"/>
    <property type="chains" value="L=1-135"/>
</dbReference>
<dbReference type="PDB" id="8URH">
    <property type="method" value="EM"/>
    <property type="resolution" value="5.70 A"/>
    <property type="chains" value="L=1-135"/>
</dbReference>
<dbReference type="PDB" id="8URI">
    <property type="method" value="EM"/>
    <property type="resolution" value="5.30 A"/>
    <property type="chains" value="L=1-135"/>
</dbReference>
<dbReference type="PDB" id="8URX">
    <property type="method" value="EM"/>
    <property type="resolution" value="6.60 A"/>
    <property type="chains" value="L=1-135"/>
</dbReference>
<dbReference type="PDB" id="8URY">
    <property type="method" value="EM"/>
    <property type="resolution" value="3.10 A"/>
    <property type="chains" value="L=1-104"/>
</dbReference>
<dbReference type="PDB" id="8VS9">
    <property type="method" value="EM"/>
    <property type="resolution" value="3.90 A"/>
    <property type="chains" value="S06=1-135"/>
</dbReference>
<dbReference type="PDB" id="8VSA">
    <property type="method" value="EM"/>
    <property type="resolution" value="3.70 A"/>
    <property type="chains" value="S06=1-135"/>
</dbReference>
<dbReference type="PDB" id="8YUO">
    <property type="method" value="EM"/>
    <property type="resolution" value="2.25 A"/>
    <property type="chains" value="F=1-135"/>
</dbReference>
<dbReference type="PDB" id="8YUP">
    <property type="method" value="EM"/>
    <property type="resolution" value="2.39 A"/>
    <property type="chains" value="F=1-135"/>
</dbReference>
<dbReference type="PDB" id="8YUQ">
    <property type="method" value="EM"/>
    <property type="resolution" value="2.41 A"/>
    <property type="chains" value="F=1-135"/>
</dbReference>
<dbReference type="PDB" id="8YUR">
    <property type="method" value="EM"/>
    <property type="resolution" value="2.47 A"/>
    <property type="chains" value="F=1-135"/>
</dbReference>
<dbReference type="PDB" id="8YUS">
    <property type="method" value="EM"/>
    <property type="resolution" value="2.43 A"/>
    <property type="chains" value="F=1-135"/>
</dbReference>
<dbReference type="PDB" id="9AX7">
    <property type="method" value="EM"/>
    <property type="resolution" value="2.63 A"/>
    <property type="chains" value="F=1-135"/>
</dbReference>
<dbReference type="PDB" id="9AX8">
    <property type="method" value="EM"/>
    <property type="resolution" value="2.60 A"/>
    <property type="chains" value="f=1-100"/>
</dbReference>
<dbReference type="PDB" id="9CG5">
    <property type="method" value="EM"/>
    <property type="resolution" value="2.59 A"/>
    <property type="chains" value="F=1-135"/>
</dbReference>
<dbReference type="PDB" id="9CG6">
    <property type="method" value="EM"/>
    <property type="resolution" value="2.61 A"/>
    <property type="chains" value="F=1-135"/>
</dbReference>
<dbReference type="PDB" id="9CG7">
    <property type="method" value="EM"/>
    <property type="resolution" value="2.75 A"/>
    <property type="chains" value="F=1-135"/>
</dbReference>
<dbReference type="PDB" id="9DUK">
    <property type="method" value="EM"/>
    <property type="resolution" value="2.56 A"/>
    <property type="chains" value="F=1-135"/>
</dbReference>
<dbReference type="PDB" id="9DUL">
    <property type="method" value="EM"/>
    <property type="resolution" value="2.56 A"/>
    <property type="chains" value="F=1-135"/>
</dbReference>
<dbReference type="PDB" id="9FBV">
    <property type="method" value="EM"/>
    <property type="resolution" value="2.40 A"/>
    <property type="chains" value="F=1-135"/>
</dbReference>
<dbReference type="PDB" id="9GFT">
    <property type="method" value="EM"/>
    <property type="resolution" value="3.10 A"/>
    <property type="chains" value="5/AF=1-135"/>
</dbReference>
<dbReference type="PDB" id="9GGR">
    <property type="method" value="EM"/>
    <property type="resolution" value="3.20 A"/>
    <property type="chains" value="5/AF=1-135"/>
</dbReference>
<dbReference type="PDB" id="9GR1">
    <property type="method" value="EM"/>
    <property type="resolution" value="3.17 A"/>
    <property type="chains" value="F=1-135"/>
</dbReference>
<dbReference type="PDB" id="9GUQ">
    <property type="method" value="EM"/>
    <property type="resolution" value="3.10 A"/>
    <property type="chains" value="G=1-131"/>
</dbReference>
<dbReference type="PDB" id="9MOR">
    <property type="method" value="EM"/>
    <property type="resolution" value="2.65 A"/>
    <property type="chains" value="k=1-135"/>
</dbReference>
<dbReference type="PDB" id="9MQ4">
    <property type="method" value="EM"/>
    <property type="resolution" value="2.78 A"/>
    <property type="chains" value="k=1-135"/>
</dbReference>
<dbReference type="PDBsum" id="1EG0"/>
<dbReference type="PDBsum" id="2YKR"/>
<dbReference type="PDBsum" id="3IY8"/>
<dbReference type="PDBsum" id="3J9Y"/>
<dbReference type="PDBsum" id="3J9Z"/>
<dbReference type="PDBsum" id="3JA1"/>
<dbReference type="PDBsum" id="3JBU"/>
<dbReference type="PDBsum" id="3JBV"/>
<dbReference type="PDBsum" id="3JCD"/>
<dbReference type="PDBsum" id="3JCE"/>
<dbReference type="PDBsum" id="3JCJ"/>
<dbReference type="PDBsum" id="3JCN"/>
<dbReference type="PDBsum" id="4A2I"/>
<dbReference type="PDBsum" id="4ADV"/>
<dbReference type="PDBsum" id="4U1U"/>
<dbReference type="PDBsum" id="4U1V"/>
<dbReference type="PDBsum" id="4U20"/>
<dbReference type="PDBsum" id="4U24"/>
<dbReference type="PDBsum" id="4U25"/>
<dbReference type="PDBsum" id="4U26"/>
<dbReference type="PDBsum" id="4U27"/>
<dbReference type="PDBsum" id="4V47"/>
<dbReference type="PDBsum" id="4V48"/>
<dbReference type="PDBsum" id="4V4H"/>
<dbReference type="PDBsum" id="4V4Q"/>
<dbReference type="PDBsum" id="4V4V"/>
<dbReference type="PDBsum" id="4V4W"/>
<dbReference type="PDBsum" id="4V50"/>
<dbReference type="PDBsum" id="4V52"/>
<dbReference type="PDBsum" id="4V53"/>
<dbReference type="PDBsum" id="4V54"/>
<dbReference type="PDBsum" id="4V55"/>
<dbReference type="PDBsum" id="4V56"/>
<dbReference type="PDBsum" id="4V57"/>
<dbReference type="PDBsum" id="4V5B"/>
<dbReference type="PDBsum" id="4V5H"/>
<dbReference type="PDBsum" id="4V5Y"/>
<dbReference type="PDBsum" id="4V64"/>
<dbReference type="PDBsum" id="4V65"/>
<dbReference type="PDBsum" id="4V66"/>
<dbReference type="PDBsum" id="4V69"/>
<dbReference type="PDBsum" id="4V6C"/>
<dbReference type="PDBsum" id="4V6D"/>
<dbReference type="PDBsum" id="4V6E"/>
<dbReference type="PDBsum" id="4V6K"/>
<dbReference type="PDBsum" id="4V6L"/>
<dbReference type="PDBsum" id="4V6M"/>
<dbReference type="PDBsum" id="4V6N"/>
<dbReference type="PDBsum" id="4V6O"/>
<dbReference type="PDBsum" id="4V6P"/>
<dbReference type="PDBsum" id="4V6Q"/>
<dbReference type="PDBsum" id="4V6R"/>
<dbReference type="PDBsum" id="4V6S"/>
<dbReference type="PDBsum" id="4V6T"/>
<dbReference type="PDBsum" id="4V6V"/>
<dbReference type="PDBsum" id="4V6Y"/>
<dbReference type="PDBsum" id="4V6Z"/>
<dbReference type="PDBsum" id="4V70"/>
<dbReference type="PDBsum" id="4V71"/>
<dbReference type="PDBsum" id="4V72"/>
<dbReference type="PDBsum" id="4V73"/>
<dbReference type="PDBsum" id="4V74"/>
<dbReference type="PDBsum" id="4V75"/>
<dbReference type="PDBsum" id="4V76"/>
<dbReference type="PDBsum" id="4V77"/>
<dbReference type="PDBsum" id="4V78"/>
<dbReference type="PDBsum" id="4V79"/>
<dbReference type="PDBsum" id="4V7A"/>
<dbReference type="PDBsum" id="4V7B"/>
<dbReference type="PDBsum" id="4V7C"/>
<dbReference type="PDBsum" id="4V7D"/>
<dbReference type="PDBsum" id="4V7I"/>
<dbReference type="PDBsum" id="4V7S"/>
<dbReference type="PDBsum" id="4V7T"/>
<dbReference type="PDBsum" id="4V7U"/>
<dbReference type="PDBsum" id="4V7V"/>
<dbReference type="PDBsum" id="4V85"/>
<dbReference type="PDBsum" id="4V89"/>
<dbReference type="PDBsum" id="4V9C"/>
<dbReference type="PDBsum" id="4V9D"/>
<dbReference type="PDBsum" id="4V9O"/>
<dbReference type="PDBsum" id="4V9P"/>
<dbReference type="PDBsum" id="4WF1"/>
<dbReference type="PDBsum" id="4WOI"/>
<dbReference type="PDBsum" id="4WWW"/>
<dbReference type="PDBsum" id="4YBB"/>
<dbReference type="PDBsum" id="5AFI"/>
<dbReference type="PDBsum" id="5H5U"/>
<dbReference type="PDBsum" id="5IQR"/>
<dbReference type="PDBsum" id="5IT8"/>
<dbReference type="PDBsum" id="5J5B"/>
<dbReference type="PDBsum" id="5J7L"/>
<dbReference type="PDBsum" id="5J88"/>
<dbReference type="PDBsum" id="5J8A"/>
<dbReference type="PDBsum" id="5J91"/>
<dbReference type="PDBsum" id="5JC9"/>
<dbReference type="PDBsum" id="5JTE"/>
<dbReference type="PDBsum" id="5JU8"/>
<dbReference type="PDBsum" id="5KCR"/>
<dbReference type="PDBsum" id="5KCS"/>
<dbReference type="PDBsum" id="5KPS"/>
<dbReference type="PDBsum" id="5KPV"/>
<dbReference type="PDBsum" id="5KPW"/>
<dbReference type="PDBsum" id="5KPX"/>
<dbReference type="PDBsum" id="5L3P"/>
<dbReference type="PDBsum" id="5LZA"/>
<dbReference type="PDBsum" id="5LZB"/>
<dbReference type="PDBsum" id="5LZC"/>
<dbReference type="PDBsum" id="5LZD"/>
<dbReference type="PDBsum" id="5LZE"/>
<dbReference type="PDBsum" id="5LZF"/>
<dbReference type="PDBsum" id="5MDV"/>
<dbReference type="PDBsum" id="5MDW"/>
<dbReference type="PDBsum" id="5MDY"/>
<dbReference type="PDBsum" id="5MDZ"/>
<dbReference type="PDBsum" id="5ME0"/>
<dbReference type="PDBsum" id="5ME1"/>
<dbReference type="PDBsum" id="5MGP"/>
<dbReference type="PDBsum" id="5MY1"/>
<dbReference type="PDBsum" id="5NO2"/>
<dbReference type="PDBsum" id="5NO3"/>
<dbReference type="PDBsum" id="5NO4"/>
<dbReference type="PDBsum" id="5NP6"/>
<dbReference type="PDBsum" id="5NWY"/>
<dbReference type="PDBsum" id="5O2R"/>
<dbReference type="PDBsum" id="5U4I"/>
<dbReference type="PDBsum" id="5U9F"/>
<dbReference type="PDBsum" id="5U9G"/>
<dbReference type="PDBsum" id="5UYK"/>
<dbReference type="PDBsum" id="5UYL"/>
<dbReference type="PDBsum" id="5UYM"/>
<dbReference type="PDBsum" id="5UYN"/>
<dbReference type="PDBsum" id="5UYP"/>
<dbReference type="PDBsum" id="5UYQ"/>
<dbReference type="PDBsum" id="5UZ4"/>
<dbReference type="PDBsum" id="5WDT"/>
<dbReference type="PDBsum" id="5WE4"/>
<dbReference type="PDBsum" id="5WE6"/>
<dbReference type="PDBsum" id="5WF0"/>
<dbReference type="PDBsum" id="5WFK"/>
<dbReference type="PDBsum" id="5WFS"/>
<dbReference type="PDBsum" id="6AWB"/>
<dbReference type="PDBsum" id="6AWC"/>
<dbReference type="PDBsum" id="6AWD"/>
<dbReference type="PDBsum" id="6BU8"/>
<dbReference type="PDBsum" id="6BY1"/>
<dbReference type="PDBsum" id="6C4I"/>
<dbReference type="PDBsum" id="6DNC"/>
<dbReference type="PDBsum" id="6ENF"/>
<dbReference type="PDBsum" id="6ENJ"/>
<dbReference type="PDBsum" id="6ENU"/>
<dbReference type="PDBsum" id="6GWT"/>
<dbReference type="PDBsum" id="6GXM"/>
<dbReference type="PDBsum" id="6GXN"/>
<dbReference type="PDBsum" id="6GXO"/>
<dbReference type="PDBsum" id="6GXP"/>
<dbReference type="PDBsum" id="6H4N"/>
<dbReference type="PDBsum" id="6H58"/>
<dbReference type="PDBsum" id="6HRM"/>
<dbReference type="PDBsum" id="6I7V"/>
<dbReference type="PDBsum" id="6NQB"/>
<dbReference type="PDBsum" id="6O7K"/>
<dbReference type="PDBsum" id="6O9J"/>
<dbReference type="PDBsum" id="6O9K"/>
<dbReference type="PDBsum" id="6OFX"/>
<dbReference type="PDBsum" id="6OG7"/>
<dbReference type="PDBsum" id="6OGF"/>
<dbReference type="PDBsum" id="6OGG"/>
<dbReference type="PDBsum" id="6OGI"/>
<dbReference type="PDBsum" id="6OM6"/>
<dbReference type="PDBsum" id="6ORE"/>
<dbReference type="PDBsum" id="6ORL"/>
<dbReference type="PDBsum" id="6OSK"/>
<dbReference type="PDBsum" id="6OSQ"/>
<dbReference type="PDBsum" id="6OST"/>
<dbReference type="PDBsum" id="6OT3"/>
<dbReference type="PDBsum" id="6OUO"/>
<dbReference type="PDBsum" id="6Q97"/>
<dbReference type="PDBsum" id="6Q98"/>
<dbReference type="PDBsum" id="6Q9A"/>
<dbReference type="PDBsum" id="6SZS"/>
<dbReference type="PDBsum" id="6TBV"/>
<dbReference type="PDBsum" id="6TC3"/>
<dbReference type="PDBsum" id="6VU3"/>
<dbReference type="PDBsum" id="6VWL"/>
<dbReference type="PDBsum" id="6VWM"/>
<dbReference type="PDBsum" id="6VWN"/>
<dbReference type="PDBsum" id="6VYQ"/>
<dbReference type="PDBsum" id="6VYR"/>
<dbReference type="PDBsum" id="6VYS"/>
<dbReference type="PDBsum" id="6VYT"/>
<dbReference type="PDBsum" id="6VYU"/>
<dbReference type="PDBsum" id="6VYW"/>
<dbReference type="PDBsum" id="6VYX"/>
<dbReference type="PDBsum" id="6VYY"/>
<dbReference type="PDBsum" id="6VYZ"/>
<dbReference type="PDBsum" id="6VZ2"/>
<dbReference type="PDBsum" id="6VZ3"/>
<dbReference type="PDBsum" id="6VZ5"/>
<dbReference type="PDBsum" id="6VZ7"/>
<dbReference type="PDBsum" id="6VZJ"/>
<dbReference type="PDBsum" id="6W6K"/>
<dbReference type="PDBsum" id="6W77"/>
<dbReference type="PDBsum" id="6W7M"/>
<dbReference type="PDBsum" id="6W7W"/>
<dbReference type="PDBsum" id="6WD0"/>
<dbReference type="PDBsum" id="6WD1"/>
<dbReference type="PDBsum" id="6WD2"/>
<dbReference type="PDBsum" id="6WD3"/>
<dbReference type="PDBsum" id="6WD4"/>
<dbReference type="PDBsum" id="6WD5"/>
<dbReference type="PDBsum" id="6WD6"/>
<dbReference type="PDBsum" id="6WD7"/>
<dbReference type="PDBsum" id="6WD8"/>
<dbReference type="PDBsum" id="6WD9"/>
<dbReference type="PDBsum" id="6WDA"/>
<dbReference type="PDBsum" id="6WDB"/>
<dbReference type="PDBsum" id="6WDC"/>
<dbReference type="PDBsum" id="6WDD"/>
<dbReference type="PDBsum" id="6WDE"/>
<dbReference type="PDBsum" id="6WDF"/>
<dbReference type="PDBsum" id="6WDG"/>
<dbReference type="PDBsum" id="6WDH"/>
<dbReference type="PDBsum" id="6WDI"/>
<dbReference type="PDBsum" id="6WDJ"/>
<dbReference type="PDBsum" id="6WDK"/>
<dbReference type="PDBsum" id="6WDL"/>
<dbReference type="PDBsum" id="6WDM"/>
<dbReference type="PDBsum" id="6WNV"/>
<dbReference type="PDBsum" id="6WNW"/>
<dbReference type="PDBsum" id="6X6T"/>
<dbReference type="PDBsum" id="6X7F"/>
<dbReference type="PDBsum" id="6X7K"/>
<dbReference type="PDBsum" id="6X9Q"/>
<dbReference type="PDBsum" id="6XDQ"/>
<dbReference type="PDBsum" id="6XDR"/>
<dbReference type="PDBsum" id="6XE0"/>
<dbReference type="PDBsum" id="6XGF"/>
<dbReference type="PDBsum" id="6XII"/>
<dbReference type="PDBsum" id="6XIJ"/>
<dbReference type="PDBsum" id="6XZA"/>
<dbReference type="PDBsum" id="6XZB"/>
<dbReference type="PDBsum" id="6Y69"/>
<dbReference type="PDBsum" id="6ZTJ"/>
<dbReference type="PDBsum" id="6ZTL"/>
<dbReference type="PDBsum" id="6ZTM"/>
<dbReference type="PDBsum" id="6ZTN"/>
<dbReference type="PDBsum" id="6ZTO"/>
<dbReference type="PDBsum" id="6ZTP"/>
<dbReference type="PDBsum" id="6ZU1"/>
<dbReference type="PDBsum" id="7ABZ"/>
<dbReference type="PDBsum" id="7AC7"/>
<dbReference type="PDBsum" id="7ACJ"/>
<dbReference type="PDBsum" id="7ACR"/>
<dbReference type="PDBsum" id="7AFI"/>
<dbReference type="PDBsum" id="7AFL"/>
<dbReference type="PDBsum" id="7AFO"/>
<dbReference type="PDBsum" id="7B5K"/>
<dbReference type="PDBsum" id="7BOD"/>
<dbReference type="PDBsum" id="7BOE"/>
<dbReference type="PDBsum" id="7BOF"/>
<dbReference type="PDBsum" id="7BOG"/>
<dbReference type="PDBsum" id="7BOH"/>
<dbReference type="PDBsum" id="7BOI"/>
<dbReference type="PDBsum" id="7CPJ"/>
<dbReference type="PDBsum" id="7D6Z"/>
<dbReference type="PDBsum" id="7D80"/>
<dbReference type="PDBsum" id="7JSS"/>
<dbReference type="PDBsum" id="7JSW"/>
<dbReference type="PDBsum" id="7JSZ"/>
<dbReference type="PDBsum" id="7JT1"/>
<dbReference type="PDBsum" id="7JT2"/>
<dbReference type="PDBsum" id="7JT3"/>
<dbReference type="PDBsum" id="7K00"/>
<dbReference type="PDBsum" id="7K50"/>
<dbReference type="PDBsum" id="7K51"/>
<dbReference type="PDBsum" id="7K52"/>
<dbReference type="PDBsum" id="7K53"/>
<dbReference type="PDBsum" id="7K54"/>
<dbReference type="PDBsum" id="7K55"/>
<dbReference type="PDBsum" id="7LV0"/>
<dbReference type="PDBsum" id="7M5D"/>
<dbReference type="PDBsum" id="7N1P"/>
<dbReference type="PDBsum" id="7N2C"/>
<dbReference type="PDBsum" id="7N2U"/>
<dbReference type="PDBsum" id="7N2V"/>
<dbReference type="PDBsum" id="7N30"/>
<dbReference type="PDBsum" id="7N31"/>
<dbReference type="PDBsum" id="7NAR"/>
<dbReference type="PDBsum" id="7NAS"/>
<dbReference type="PDBsum" id="7NAT"/>
<dbReference type="PDBsum" id="7NAU"/>
<dbReference type="PDBsum" id="7NAV"/>
<dbReference type="PDBsum" id="7NAX"/>
<dbReference type="PDBsum" id="7NBU"/>
<dbReference type="PDBsum" id="7NWT"/>
<dbReference type="PDBsum" id="7O19"/>
<dbReference type="PDBsum" id="7O1A"/>
<dbReference type="PDBsum" id="7O1C"/>
<dbReference type="PDBsum" id="7O5H"/>
<dbReference type="PDBsum" id="7OE0"/>
<dbReference type="PDBsum" id="7OE1"/>
<dbReference type="PDBsum" id="7OI0"/>
<dbReference type="PDBsum" id="7OIZ"/>
<dbReference type="PDBsum" id="7OJ0"/>
<dbReference type="PDBsum" id="7P3K"/>
<dbReference type="PDBsum" id="7PJS"/>
<dbReference type="PDBsum" id="7PJT"/>
<dbReference type="PDBsum" id="7PJU"/>
<dbReference type="PDBsum" id="7PJV"/>
<dbReference type="PDBsum" id="7PJW"/>
<dbReference type="PDBsum" id="7PJX"/>
<dbReference type="PDBsum" id="7PJY"/>
<dbReference type="PDBsum" id="7PJZ"/>
<dbReference type="PDBsum" id="7Q4K"/>
<dbReference type="PDBsum" id="7QG8"/>
<dbReference type="PDBsum" id="7QGH"/>
<dbReference type="PDBsum" id="7QGN"/>
<dbReference type="PDBsum" id="7QGR"/>
<dbReference type="PDBsum" id="7S1G"/>
<dbReference type="PDBsum" id="7S1H"/>
<dbReference type="PDBsum" id="7S1I"/>
<dbReference type="PDBsum" id="7S1J"/>
<dbReference type="PDBsum" id="7S1K"/>
<dbReference type="PDBsum" id="7SA4"/>
<dbReference type="PDBsum" id="7SS9"/>
<dbReference type="PDBsum" id="7SSD"/>
<dbReference type="PDBsum" id="7SSL"/>
<dbReference type="PDBsum" id="7SSN"/>
<dbReference type="PDBsum" id="7SSO"/>
<dbReference type="PDBsum" id="7SSW"/>
<dbReference type="PDBsum" id="7ST2"/>
<dbReference type="PDBsum" id="7ST6"/>
<dbReference type="PDBsum" id="7ST7"/>
<dbReference type="PDBsum" id="7TOS"/>
<dbReference type="PDBsum" id="7UG7"/>
<dbReference type="PDBsum" id="7UPH"/>
<dbReference type="PDBsum" id="7Y7C"/>
<dbReference type="PDBsum" id="7Y7D"/>
<dbReference type="PDBsum" id="7Y7E"/>
<dbReference type="PDBsum" id="7Y7F"/>
<dbReference type="PDBsum" id="7Y7G"/>
<dbReference type="PDBsum" id="7Y7H"/>
<dbReference type="PDBsum" id="7ZTA"/>
<dbReference type="PDBsum" id="8A3L"/>
<dbReference type="PDBsum" id="8AKN"/>
<dbReference type="PDBsum" id="8AM9"/>
<dbReference type="PDBsum" id="8AYE"/>
<dbReference type="PDBsum" id="8B0X"/>
<dbReference type="PDBsum" id="8B7Y"/>
<dbReference type="PDBsum" id="8BF7"/>
<dbReference type="PDBsum" id="8BGE"/>
<dbReference type="PDBsum" id="8BGH"/>
<dbReference type="PDBsum" id="8BH4"/>
<dbReference type="PDBsum" id="8BHJ"/>
<dbReference type="PDBsum" id="8BHL"/>
<dbReference type="PDBsum" id="8BHN"/>
<dbReference type="PDBsum" id="8BHP"/>
<dbReference type="PDBsum" id="8BIL"/>
<dbReference type="PDBsum" id="8BIM"/>
<dbReference type="PDBsum" id="8CAI"/>
<dbReference type="PDBsum" id="8CEP"/>
<dbReference type="PDBsum" id="8CGJ"/>
<dbReference type="PDBsum" id="8CGR"/>
<dbReference type="PDBsum" id="8CGU"/>
<dbReference type="PDBsum" id="8EIU"/>
<dbReference type="PDBsum" id="8EKC"/>
<dbReference type="PDBsum" id="8EMM"/>
<dbReference type="PDBsum" id="8EYQ"/>
<dbReference type="PDBsum" id="8EYT"/>
<dbReference type="PDBsum" id="8FIZ"/>
<dbReference type="PDBsum" id="8FTO"/>
<dbReference type="PDBsum" id="8FZD"/>
<dbReference type="PDBsum" id="8FZE"/>
<dbReference type="PDBsum" id="8FZF"/>
<dbReference type="PDBsum" id="8FZG"/>
<dbReference type="PDBsum" id="8FZH"/>
<dbReference type="PDBsum" id="8FZI"/>
<dbReference type="PDBsum" id="8FZJ"/>
<dbReference type="PDBsum" id="8G2U"/>
<dbReference type="PDBsum" id="8G31"/>
<dbReference type="PDBsum" id="8G34"/>
<dbReference type="PDBsum" id="8G38"/>
<dbReference type="PDBsum" id="8G6W"/>
<dbReference type="PDBsum" id="8G7P"/>
<dbReference type="PDBsum" id="8G7Q"/>
<dbReference type="PDBsum" id="8G7R"/>
<dbReference type="PDBsum" id="8G7S"/>
<dbReference type="PDBsum" id="8GHU"/>
<dbReference type="PDBsum" id="8HSP"/>
<dbReference type="PDBsum" id="8HTZ"/>
<dbReference type="PDBsum" id="8HU1"/>
<dbReference type="PDBsum" id="8IFB"/>
<dbReference type="PDBsum" id="8IFC"/>
<dbReference type="PDBsum" id="8JSG"/>
<dbReference type="PDBsum" id="8JSH"/>
<dbReference type="PDBsum" id="8K3O"/>
<dbReference type="PDBsum" id="8K4E"/>
<dbReference type="PDBsum" id="8P16"/>
<dbReference type="PDBsum" id="8P17"/>
<dbReference type="PDBsum" id="8P18"/>
<dbReference type="PDBsum" id="8PEG"/>
<dbReference type="PDBsum" id="8PHJ"/>
<dbReference type="PDBsum" id="8PKL"/>
<dbReference type="PDBsum" id="8PVA"/>
<dbReference type="PDBsum" id="8Q4F"/>
<dbReference type="PDBsum" id="8QBT"/>
<dbReference type="PDBsum" id="8QK7"/>
<dbReference type="PDBsum" id="8QOA"/>
<dbReference type="PDBsum" id="8R3V"/>
<dbReference type="PDBsum" id="8R6C"/>
<dbReference type="PDBsum" id="8R8M"/>
<dbReference type="PDBsum" id="8RCL"/>
<dbReference type="PDBsum" id="8RCM"/>
<dbReference type="PDBsum" id="8RCS"/>
<dbReference type="PDBsum" id="8RCT"/>
<dbReference type="PDBsum" id="8SYL"/>
<dbReference type="PDBsum" id="8T5D"/>
<dbReference type="PDBsum" id="8T5H"/>
<dbReference type="PDBsum" id="8UPO"/>
<dbReference type="PDBsum" id="8UPR"/>
<dbReference type="PDBsum" id="8UQL"/>
<dbReference type="PDBsum" id="8UQM"/>
<dbReference type="PDBsum" id="8UQP"/>
<dbReference type="PDBsum" id="8UR0"/>
<dbReference type="PDBsum" id="8URH"/>
<dbReference type="PDBsum" id="8URI"/>
<dbReference type="PDBsum" id="8URX"/>
<dbReference type="PDBsum" id="8URY"/>
<dbReference type="PDBsum" id="8VS9"/>
<dbReference type="PDBsum" id="8VSA"/>
<dbReference type="PDBsum" id="8YUO"/>
<dbReference type="PDBsum" id="8YUP"/>
<dbReference type="PDBsum" id="8YUQ"/>
<dbReference type="PDBsum" id="8YUR"/>
<dbReference type="PDBsum" id="8YUS"/>
<dbReference type="PDBsum" id="9AX7"/>
<dbReference type="PDBsum" id="9AX8"/>
<dbReference type="PDBsum" id="9CG5"/>
<dbReference type="PDBsum" id="9CG6"/>
<dbReference type="PDBsum" id="9CG7"/>
<dbReference type="PDBsum" id="9DUK"/>
<dbReference type="PDBsum" id="9DUL"/>
<dbReference type="PDBsum" id="9FBV"/>
<dbReference type="PDBsum" id="9GFT"/>
<dbReference type="PDBsum" id="9GGR"/>
<dbReference type="PDBsum" id="9GR1"/>
<dbReference type="PDBsum" id="9GUQ"/>
<dbReference type="PDBsum" id="9MOR"/>
<dbReference type="PDBsum" id="9MQ4"/>
<dbReference type="EMDB" id="EMD-0076"/>
<dbReference type="EMDB" id="EMD-0080"/>
<dbReference type="EMDB" id="EMD-0081"/>
<dbReference type="EMDB" id="EMD-0082"/>
<dbReference type="EMDB" id="EMD-0083"/>
<dbReference type="EMDB" id="EMD-0137"/>
<dbReference type="EMDB" id="EMD-0139"/>
<dbReference type="EMDB" id="EMD-0261"/>
<dbReference type="EMDB" id="EMD-10353"/>
<dbReference type="EMDB" id="EMD-10453"/>
<dbReference type="EMDB" id="EMD-10458"/>
<dbReference type="EMDB" id="EMD-10656"/>
<dbReference type="EMDB" id="EMD-10657"/>
<dbReference type="EMDB" id="EMD-10705"/>
<dbReference type="EMDB" id="EMD-11710"/>
<dbReference type="EMDB" id="EMD-11713"/>
<dbReference type="EMDB" id="EMD-11717"/>
<dbReference type="EMDB" id="EMD-11718"/>
<dbReference type="EMDB" id="EMD-11766"/>
<dbReference type="EMDB" id="EMD-11769"/>
<dbReference type="EMDB" id="EMD-11772"/>
<dbReference type="EMDB" id="EMD-12035"/>
<dbReference type="EMDB" id="EMD-12239"/>
<dbReference type="EMDB" id="EMD-12240"/>
<dbReference type="EMDB" id="EMD-12241"/>
<dbReference type="EMDB" id="EMD-12242"/>
<dbReference type="EMDB" id="EMD-12243"/>
<dbReference type="EMDB" id="EMD-12244"/>
<dbReference type="EMDB" id="EMD-12245"/>
<dbReference type="EMDB" id="EMD-12246"/>
<dbReference type="EMDB" id="EMD-12247"/>
<dbReference type="EMDB" id="EMD-12248"/>
<dbReference type="EMDB" id="EMD-12249"/>
<dbReference type="EMDB" id="EMD-12251"/>
<dbReference type="EMDB" id="EMD-12261"/>
<dbReference type="EMDB" id="EMD-12635"/>
<dbReference type="EMDB" id="EMD-12693"/>
<dbReference type="EMDB" id="EMD-12694"/>
<dbReference type="EMDB" id="EMD-12695"/>
<dbReference type="EMDB" id="EMD-12736"/>
<dbReference type="EMDB" id="EMD-12856"/>
<dbReference type="EMDB" id="EMD-12857"/>
<dbReference type="EMDB" id="EMD-12916"/>
<dbReference type="EMDB" id="EMD-12936"/>
<dbReference type="EMDB" id="EMD-12937"/>
<dbReference type="EMDB" id="EMD-13180"/>
<dbReference type="EMDB" id="EMD-13458"/>
<dbReference type="EMDB" id="EMD-13459"/>
<dbReference type="EMDB" id="EMD-13460"/>
<dbReference type="EMDB" id="EMD-13461"/>
<dbReference type="EMDB" id="EMD-13462"/>
<dbReference type="EMDB" id="EMD-13463"/>
<dbReference type="EMDB" id="EMD-13464"/>
<dbReference type="EMDB" id="EMD-13465"/>
<dbReference type="EMDB" id="EMD-13805"/>
<dbReference type="EMDB" id="EMD-13952"/>
<dbReference type="EMDB" id="EMD-13955"/>
<dbReference type="EMDB" id="EMD-13958"/>
<dbReference type="EMDB" id="EMD-14956"/>
<dbReference type="EMDB" id="EMD-15116"/>
<dbReference type="EMDB" id="EMD-15488"/>
<dbReference type="EMDB" id="EMD-15523"/>
<dbReference type="EMDB" id="EMD-15712"/>
<dbReference type="EMDB" id="EMD-15793"/>
<dbReference type="EMDB" id="EMD-15905"/>
<dbReference type="EMDB" id="EMD-16015"/>
<dbReference type="EMDB" id="EMD-16029"/>
<dbReference type="EMDB" id="EMD-16031"/>
<dbReference type="EMDB" id="EMD-16047"/>
<dbReference type="EMDB" id="EMD-16057"/>
<dbReference type="EMDB" id="EMD-16059"/>
<dbReference type="EMDB" id="EMD-16062"/>
<dbReference type="EMDB" id="EMD-16065"/>
<dbReference type="EMDB" id="EMD-16081"/>
<dbReference type="EMDB" id="EMD-16082"/>
<dbReference type="EMDB" id="EMD-16526"/>
<dbReference type="EMDB" id="EMD-16612"/>
<dbReference type="EMDB" id="EMD-16645"/>
<dbReference type="EMDB" id="EMD-16650"/>
<dbReference type="EMDB" id="EMD-16651"/>
<dbReference type="EMDB" id="EMD-17346"/>
<dbReference type="EMDB" id="EMD-17347"/>
<dbReference type="EMDB" id="EMD-17348"/>
<dbReference type="EMDB" id="EMD-17631"/>
<dbReference type="EMDB" id="EMD-17667"/>
<dbReference type="EMDB" id="EMD-17743"/>
<dbReference type="EMDB" id="EMD-17959"/>
<dbReference type="EMDB" id="EMD-18145"/>
<dbReference type="EMDB" id="EMD-18320"/>
<dbReference type="EMDB" id="EMD-18458"/>
<dbReference type="EMDB" id="EMD-18534"/>
<dbReference type="EMDB" id="EMD-18875"/>
<dbReference type="EMDB" id="EMD-18950"/>
<dbReference type="EMDB" id="EMD-19004"/>
<dbReference type="EMDB" id="EMD-19054"/>
<dbReference type="EMDB" id="EMD-19055"/>
<dbReference type="EMDB" id="EMD-19058"/>
<dbReference type="EMDB" id="EMD-19059"/>
<dbReference type="EMDB" id="EMD-20048"/>
<dbReference type="EMDB" id="EMD-20052"/>
<dbReference type="EMDB" id="EMD-20121"/>
<dbReference type="EMDB" id="EMD-21420"/>
<dbReference type="EMDB" id="EMD-21421"/>
<dbReference type="EMDB" id="EMD-21422"/>
<dbReference type="EMDB" id="EMD-21468"/>
<dbReference type="EMDB" id="EMD-21469"/>
<dbReference type="EMDB" id="EMD-21470"/>
<dbReference type="EMDB" id="EMD-21471"/>
<dbReference type="EMDB" id="EMD-21472"/>
<dbReference type="EMDB" id="EMD-21475"/>
<dbReference type="EMDB" id="EMD-21476"/>
<dbReference type="EMDB" id="EMD-21477"/>
<dbReference type="EMDB" id="EMD-21482"/>
<dbReference type="EMDB" id="EMD-21485"/>
<dbReference type="EMDB" id="EMD-21494"/>
<dbReference type="EMDB" id="EMD-21558"/>
<dbReference type="EMDB" id="EMD-21569"/>
<dbReference type="EMDB" id="EMD-21571"/>
<dbReference type="EMDB" id="EMD-21573"/>
<dbReference type="EMDB" id="EMD-21625"/>
<dbReference type="EMDB" id="EMD-21630"/>
<dbReference type="EMDB" id="EMD-21631"/>
<dbReference type="EMDB" id="EMD-21632"/>
<dbReference type="EMDB" id="EMD-21633"/>
<dbReference type="EMDB" id="EMD-21634"/>
<dbReference type="EMDB" id="EMD-21635"/>
<dbReference type="EMDB" id="EMD-21636"/>
<dbReference type="EMDB" id="EMD-21637"/>
<dbReference type="EMDB" id="EMD-21638"/>
<dbReference type="EMDB" id="EMD-21639"/>
<dbReference type="EMDB" id="EMD-21640"/>
<dbReference type="EMDB" id="EMD-21641"/>
<dbReference type="EMDB" id="EMD-21857"/>
<dbReference type="EMDB" id="EMD-21858"/>
<dbReference type="EMDB" id="EMD-22082"/>
<dbReference type="EMDB" id="EMD-22084"/>
<dbReference type="EMDB" id="EMD-22087"/>
<dbReference type="EMDB" id="EMD-22107"/>
<dbReference type="EMDB" id="EMD-22141"/>
<dbReference type="EMDB" id="EMD-22142"/>
<dbReference type="EMDB" id="EMD-22143"/>
<dbReference type="EMDB" id="EMD-22181"/>
<dbReference type="EMDB" id="EMD-22192"/>
<dbReference type="EMDB" id="EMD-22193"/>
<dbReference type="EMDB" id="EMD-22459"/>
<dbReference type="EMDB" id="EMD-22461"/>
<dbReference type="EMDB" id="EMD-22464"/>
<dbReference type="EMDB" id="EMD-22466"/>
<dbReference type="EMDB" id="EMD-22469"/>
<dbReference type="EMDB" id="EMD-22472"/>
<dbReference type="EMDB" id="EMD-22586"/>
<dbReference type="EMDB" id="EMD-22669"/>
<dbReference type="EMDB" id="EMD-22670"/>
<dbReference type="EMDB" id="EMD-22671"/>
<dbReference type="EMDB" id="EMD-22672"/>
<dbReference type="EMDB" id="EMD-22673"/>
<dbReference type="EMDB" id="EMD-22674"/>
<dbReference type="EMDB" id="EMD-23528"/>
<dbReference type="EMDB" id="EMD-24120"/>
<dbReference type="EMDB" id="EMD-24132"/>
<dbReference type="EMDB" id="EMD-24133"/>
<dbReference type="EMDB" id="EMD-24134"/>
<dbReference type="EMDB" id="EMD-24135"/>
<dbReference type="EMDB" id="EMD-24136"/>
<dbReference type="EMDB" id="EMD-24800"/>
<dbReference type="EMDB" id="EMD-24801"/>
<dbReference type="EMDB" id="EMD-24802"/>
<dbReference type="EMDB" id="EMD-24803"/>
<dbReference type="EMDB" id="EMD-24804"/>
<dbReference type="EMDB" id="EMD-24944"/>
<dbReference type="EMDB" id="EMD-25405"/>
<dbReference type="EMDB" id="EMD-25407"/>
<dbReference type="EMDB" id="EMD-25409"/>
<dbReference type="EMDB" id="EMD-25410"/>
<dbReference type="EMDB" id="EMD-25411"/>
<dbReference type="EMDB" id="EMD-25415"/>
<dbReference type="EMDB" id="EMD-25418"/>
<dbReference type="EMDB" id="EMD-25420"/>
<dbReference type="EMDB" id="EMD-25421"/>
<dbReference type="EMDB" id="EMD-26037"/>
<dbReference type="EMDB" id="EMD-26486"/>
<dbReference type="EMDB" id="EMD-26666"/>
<dbReference type="EMDB" id="EMD-28165"/>
<dbReference type="EMDB" id="EMD-28254"/>
<dbReference type="EMDB" id="EMD-28692"/>
<dbReference type="EMDB" id="EMD-28720"/>
<dbReference type="EMDB" id="EMD-29214"/>
<dbReference type="EMDB" id="EMD-29449"/>
<dbReference type="EMDB" id="EMD-29681"/>
<dbReference type="EMDB" id="EMD-29687"/>
<dbReference type="EMDB" id="EMD-29688"/>
<dbReference type="EMDB" id="EMD-29689"/>
<dbReference type="EMDB" id="EMD-29786"/>
<dbReference type="EMDB" id="EMD-30431"/>
<dbReference type="EMDB" id="EMD-30598"/>
<dbReference type="EMDB" id="EMD-30611"/>
<dbReference type="EMDB" id="EMD-33660"/>
<dbReference type="EMDB" id="EMD-33661"/>
<dbReference type="EMDB" id="EMD-33662"/>
<dbReference type="EMDB" id="EMD-33663"/>
<dbReference type="EMDB" id="EMD-33664"/>
<dbReference type="EMDB" id="EMD-33665"/>
<dbReference type="EMDB" id="EMD-3489"/>
<dbReference type="EMDB" id="EMD-3490"/>
<dbReference type="EMDB" id="EMD-3492"/>
<dbReference type="EMDB" id="EMD-3493"/>
<dbReference type="EMDB" id="EMD-3494"/>
<dbReference type="EMDB" id="EMD-3495"/>
<dbReference type="EMDB" id="EMD-35001"/>
<dbReference type="EMDB" id="EMD-35020"/>
<dbReference type="EMDB" id="EMD-35022"/>
<dbReference type="EMDB" id="EMD-3508"/>
<dbReference type="EMDB" id="EMD-35411"/>
<dbReference type="EMDB" id="EMD-35412"/>
<dbReference type="EMDB" id="EMD-3580"/>
<dbReference type="EMDB" id="EMD-3661"/>
<dbReference type="EMDB" id="EMD-36619"/>
<dbReference type="EMDB" id="EMD-3662"/>
<dbReference type="EMDB" id="EMD-36620"/>
<dbReference type="EMDB" id="EMD-3663"/>
<dbReference type="EMDB" id="EMD-36854"/>
<dbReference type="EMDB" id="EMD-36883"/>
<dbReference type="EMDB" id="EMD-3713"/>
<dbReference type="EMDB" id="EMD-3730"/>
<dbReference type="EMDB" id="EMD-3898"/>
<dbReference type="EMDB" id="EMD-3899"/>
<dbReference type="EMDB" id="EMD-3903"/>
<dbReference type="EMDB" id="EMD-39577"/>
<dbReference type="EMDB" id="EMD-39578"/>
<dbReference type="EMDB" id="EMD-39579"/>
<dbReference type="EMDB" id="EMD-39580"/>
<dbReference type="EMDB" id="EMD-39581"/>
<dbReference type="EMDB" id="EMD-4001"/>
<dbReference type="EMDB" id="EMD-40051"/>
<dbReference type="EMDB" id="EMD-41049"/>
<dbReference type="EMDB" id="EMD-41050"/>
<dbReference type="EMDB" id="EMD-4121"/>
<dbReference type="EMDB" id="EMD-4122"/>
<dbReference type="EMDB" id="EMD-4123"/>
<dbReference type="EMDB" id="EMD-4124"/>
<dbReference type="EMDB" id="EMD-4125"/>
<dbReference type="EMDB" id="EMD-4126"/>
<dbReference type="EMDB" id="EMD-42453"/>
<dbReference type="EMDB" id="EMD-42454"/>
<dbReference type="EMDB" id="EMD-42473"/>
<dbReference type="EMDB" id="EMD-42474"/>
<dbReference type="EMDB" id="EMD-42477"/>
<dbReference type="EMDB" id="EMD-42479"/>
<dbReference type="EMDB" id="EMD-42492"/>
<dbReference type="EMDB" id="EMD-42493"/>
<dbReference type="EMDB" id="EMD-42503"/>
<dbReference type="EMDB" id="EMD-43490"/>
<dbReference type="EMDB" id="EMD-43491"/>
<dbReference type="EMDB" id="EMD-43929"/>
<dbReference type="EMDB" id="EMD-43930"/>
<dbReference type="EMDB" id="EMD-4476"/>
<dbReference type="EMDB" id="EMD-4477"/>
<dbReference type="EMDB" id="EMD-4478"/>
<dbReference type="EMDB" id="EMD-45569"/>
<dbReference type="EMDB" id="EMD-45572"/>
<dbReference type="EMDB" id="EMD-45573"/>
<dbReference type="EMDB" id="EMD-47168"/>
<dbReference type="EMDB" id="EMD-47169"/>
<dbReference type="EMDB" id="EMD-48479"/>
<dbReference type="EMDB" id="EMD-48513"/>
<dbReference type="EMDB" id="EMD-50296"/>
<dbReference type="EMDB" id="EMD-51318"/>
<dbReference type="EMDB" id="EMD-51340"/>
<dbReference type="EMDB" id="EMD-51517"/>
<dbReference type="EMDB" id="EMD-51616"/>
<dbReference type="EMDB" id="EMD-6667"/>
<dbReference type="EMDB" id="EMD-7014"/>
<dbReference type="EMDB" id="EMD-7015"/>
<dbReference type="EMDB" id="EMD-7289"/>
<dbReference type="EMDB" id="EMD-7341"/>
<dbReference type="EMDB" id="EMD-7970"/>
<dbReference type="EMDB" id="EMD-8107"/>
<dbReference type="EMDB" id="EMD-8175"/>
<dbReference type="EMDB" id="EMD-8176"/>
<dbReference type="EMDB" id="EMD-8237"/>
<dbReference type="EMDB" id="EMD-8238"/>
<dbReference type="EMDB" id="EMD-8279"/>
<dbReference type="EMDB" id="EMD-8280"/>
<dbReference type="EMDB" id="EMD-8281"/>
<dbReference type="EMDB" id="EMD-8282"/>
<dbReference type="EMDB" id="EMD-8505"/>
<dbReference type="EMDB" id="EMD-8615"/>
<dbReference type="EMDB" id="EMD-8616"/>
<dbReference type="EMDB" id="EMD-8617"/>
<dbReference type="EMDB" id="EMD-8618"/>
<dbReference type="EMDB" id="EMD-8619"/>
<dbReference type="EMDB" id="EMD-8620"/>
<dbReference type="EMDB" id="EMD-8621"/>
<dbReference type="EMDB" id="EMD-8813"/>
<dbReference type="EMDB" id="EMD-8814"/>
<dbReference type="EMDB" id="EMD-8815"/>
<dbReference type="EMDB" id="EMD-8828"/>
<dbReference type="SMR" id="P02358"/>
<dbReference type="BioGRID" id="4259641">
    <property type="interactions" value="284"/>
</dbReference>
<dbReference type="BioGRID" id="853015">
    <property type="interactions" value="1"/>
</dbReference>
<dbReference type="ComplexPortal" id="CPX-3802">
    <property type="entry name" value="30S small ribosomal subunit"/>
</dbReference>
<dbReference type="DIP" id="DIP-10782N"/>
<dbReference type="FunCoup" id="P02358">
    <property type="interactions" value="923"/>
</dbReference>
<dbReference type="IntAct" id="P02358">
    <property type="interactions" value="81"/>
</dbReference>
<dbReference type="STRING" id="511145.b4200"/>
<dbReference type="iPTMnet" id="P02358"/>
<dbReference type="jPOST" id="P02358"/>
<dbReference type="PaxDb" id="511145-b4200"/>
<dbReference type="EnsemblBacteria" id="AAC77157">
    <property type="protein sequence ID" value="AAC77157"/>
    <property type="gene ID" value="b4200"/>
</dbReference>
<dbReference type="GeneID" id="948723"/>
<dbReference type="KEGG" id="ecj:JW4158"/>
<dbReference type="KEGG" id="eco:b4200"/>
<dbReference type="PATRIC" id="fig|511145.12.peg.4332"/>
<dbReference type="EchoBASE" id="EB0898"/>
<dbReference type="eggNOG" id="COG0360">
    <property type="taxonomic scope" value="Bacteria"/>
</dbReference>
<dbReference type="HOGENOM" id="CLU_113441_6_1_6"/>
<dbReference type="InParanoid" id="P02358"/>
<dbReference type="PhylomeDB" id="P02358"/>
<dbReference type="BioCyc" id="EcoCyc:EG10905-MONOMER"/>
<dbReference type="BioCyc" id="MetaCyc:EG10905-MONOMER"/>
<dbReference type="EvolutionaryTrace" id="P02358"/>
<dbReference type="PRO" id="PR:P02358"/>
<dbReference type="Proteomes" id="UP000000625">
    <property type="component" value="Chromosome"/>
</dbReference>
<dbReference type="GO" id="GO:0005737">
    <property type="term" value="C:cytoplasm"/>
    <property type="evidence" value="ECO:0000314"/>
    <property type="project" value="ComplexPortal"/>
</dbReference>
<dbReference type="GO" id="GO:0005829">
    <property type="term" value="C:cytosol"/>
    <property type="evidence" value="ECO:0000314"/>
    <property type="project" value="EcoCyc"/>
</dbReference>
<dbReference type="GO" id="GO:0022627">
    <property type="term" value="C:cytosolic small ribosomal subunit"/>
    <property type="evidence" value="ECO:0000314"/>
    <property type="project" value="EcoliWiki"/>
</dbReference>
<dbReference type="GO" id="GO:0048027">
    <property type="term" value="F:mRNA 5'-UTR binding"/>
    <property type="evidence" value="ECO:0000314"/>
    <property type="project" value="EcoCyc"/>
</dbReference>
<dbReference type="GO" id="GO:0070181">
    <property type="term" value="F:small ribosomal subunit rRNA binding"/>
    <property type="evidence" value="ECO:0000314"/>
    <property type="project" value="EcoCyc"/>
</dbReference>
<dbReference type="GO" id="GO:0003735">
    <property type="term" value="F:structural constituent of ribosome"/>
    <property type="evidence" value="ECO:0000318"/>
    <property type="project" value="GO_Central"/>
</dbReference>
<dbReference type="GO" id="GO:0002181">
    <property type="term" value="P:cytoplasmic translation"/>
    <property type="evidence" value="ECO:0000303"/>
    <property type="project" value="ComplexPortal"/>
</dbReference>
<dbReference type="CDD" id="cd00473">
    <property type="entry name" value="bS6"/>
    <property type="match status" value="1"/>
</dbReference>
<dbReference type="FunFam" id="3.30.70.60:FF:000003">
    <property type="entry name" value="30S ribosomal protein S6"/>
    <property type="match status" value="1"/>
</dbReference>
<dbReference type="Gene3D" id="3.30.70.60">
    <property type="match status" value="1"/>
</dbReference>
<dbReference type="HAMAP" id="MF_00360">
    <property type="entry name" value="Ribosomal_bS6"/>
    <property type="match status" value="1"/>
</dbReference>
<dbReference type="InterPro" id="IPR000529">
    <property type="entry name" value="Ribosomal_bS6"/>
</dbReference>
<dbReference type="InterPro" id="IPR020815">
    <property type="entry name" value="Ribosomal_bS6_CS"/>
</dbReference>
<dbReference type="InterPro" id="IPR035980">
    <property type="entry name" value="Ribosomal_bS6_sf"/>
</dbReference>
<dbReference type="InterPro" id="IPR020814">
    <property type="entry name" value="Ribosomal_S6_plastid/chlpt"/>
</dbReference>
<dbReference type="InterPro" id="IPR014717">
    <property type="entry name" value="Transl_elong_EF1B/ribsomal_bS6"/>
</dbReference>
<dbReference type="NCBIfam" id="TIGR00166">
    <property type="entry name" value="S6"/>
    <property type="match status" value="1"/>
</dbReference>
<dbReference type="PANTHER" id="PTHR21011">
    <property type="entry name" value="MITOCHONDRIAL 28S RIBOSOMAL PROTEIN S6"/>
    <property type="match status" value="1"/>
</dbReference>
<dbReference type="PANTHER" id="PTHR21011:SF1">
    <property type="entry name" value="SMALL RIBOSOMAL SUBUNIT PROTEIN BS6M"/>
    <property type="match status" value="1"/>
</dbReference>
<dbReference type="Pfam" id="PF01250">
    <property type="entry name" value="Ribosomal_S6"/>
    <property type="match status" value="1"/>
</dbReference>
<dbReference type="SUPFAM" id="SSF54995">
    <property type="entry name" value="Ribosomal protein S6"/>
    <property type="match status" value="1"/>
</dbReference>
<dbReference type="PROSITE" id="PS01048">
    <property type="entry name" value="RIBOSOMAL_S6"/>
    <property type="match status" value="1"/>
</dbReference>
<protein>
    <recommendedName>
        <fullName evidence="12">Small ribosomal subunit protein bS6</fullName>
    </recommendedName>
    <alternativeName>
        <fullName>30S ribosomal protein S6</fullName>
    </alternativeName>
    <component>
        <recommendedName>
            <fullName>Small ribosomal subunit protein bS6, fully modified isoform</fullName>
        </recommendedName>
    </component>
    <component>
        <recommendedName>
            <fullName>Small ribosomal subunit protein bS6, non-modified isoform</fullName>
        </recommendedName>
    </component>
</protein>
<keyword id="KW-0002">3D-structure</keyword>
<keyword id="KW-0007">Acetylation</keyword>
<keyword id="KW-0903">Direct protein sequencing</keyword>
<keyword id="KW-1185">Reference proteome</keyword>
<keyword id="KW-0687">Ribonucleoprotein</keyword>
<keyword id="KW-0689">Ribosomal protein</keyword>
<keyword id="KW-0694">RNA-binding</keyword>
<keyword id="KW-0699">rRNA-binding</keyword>
<evidence type="ECO:0000256" key="1">
    <source>
        <dbReference type="SAM" id="MobiDB-lite"/>
    </source>
</evidence>
<evidence type="ECO:0000269" key="2">
    <source>
    </source>
</evidence>
<evidence type="ECO:0000269" key="3">
    <source>
    </source>
</evidence>
<evidence type="ECO:0000269" key="4">
    <source>
    </source>
</evidence>
<evidence type="ECO:0000269" key="5">
    <source>
    </source>
</evidence>
<evidence type="ECO:0000269" key="6">
    <source>
    </source>
</evidence>
<evidence type="ECO:0000269" key="7">
    <source>
    </source>
</evidence>
<evidence type="ECO:0000269" key="8">
    <source>
    </source>
</evidence>
<evidence type="ECO:0000269" key="9">
    <source>
    </source>
</evidence>
<evidence type="ECO:0000269" key="10">
    <source>
    </source>
</evidence>
<evidence type="ECO:0000269" key="11">
    <source>
    </source>
</evidence>
<evidence type="ECO:0000303" key="12">
    <source>
    </source>
</evidence>
<evidence type="ECO:0000305" key="13"/>
<evidence type="ECO:0000305" key="14">
    <source>
    </source>
</evidence>
<evidence type="ECO:0007829" key="15">
    <source>
        <dbReference type="PDB" id="7BOG"/>
    </source>
</evidence>
<evidence type="ECO:0007829" key="16">
    <source>
        <dbReference type="PDB" id="8CGJ"/>
    </source>
</evidence>
<gene>
    <name type="primary">rpsF</name>
    <name type="ordered locus">b4200</name>
    <name type="ordered locus">JW4158</name>
</gene>
<name>RS6_ECOLI</name>